<sequence length="142" mass="14875">MAKKVQAYVKLQVAAGMANPSPPVGPALGQQGVNIMEFCKAFNAKTDSIEKGLPIPVVITVYADRSFTFVTKTPPAAVLLKKAAGIKSGSGKPNKDKVGKISRAQLQEIAQTKAADMTGADIEAMTRSIEGTARSMGLVVED</sequence>
<keyword id="KW-0002">3D-structure</keyword>
<keyword id="KW-0903">Direct protein sequencing</keyword>
<keyword id="KW-0488">Methylation</keyword>
<keyword id="KW-1185">Reference proteome</keyword>
<keyword id="KW-0687">Ribonucleoprotein</keyword>
<keyword id="KW-0689">Ribosomal protein</keyword>
<keyword id="KW-0694">RNA-binding</keyword>
<keyword id="KW-0699">rRNA-binding</keyword>
<name>RL11_ECOLI</name>
<evidence type="ECO:0000255" key="1">
    <source>
        <dbReference type="HAMAP-Rule" id="MF_00736"/>
    </source>
</evidence>
<evidence type="ECO:0000269" key="2">
    <source>
    </source>
</evidence>
<evidence type="ECO:0000269" key="3">
    <source>
    </source>
</evidence>
<evidence type="ECO:0000269" key="4">
    <source>
    </source>
</evidence>
<evidence type="ECO:0000269" key="5">
    <source>
    </source>
</evidence>
<evidence type="ECO:0000269" key="6">
    <source>
    </source>
</evidence>
<evidence type="ECO:0000269" key="7">
    <source>
    </source>
</evidence>
<evidence type="ECO:0000269" key="8">
    <source>
    </source>
</evidence>
<evidence type="ECO:0000269" key="9">
    <source>
    </source>
</evidence>
<evidence type="ECO:0000269" key="10">
    <source>
    </source>
</evidence>
<evidence type="ECO:0000269" key="11">
    <source>
    </source>
</evidence>
<evidence type="ECO:0000269" key="12">
    <source>
    </source>
</evidence>
<evidence type="ECO:0000269" key="13">
    <source>
    </source>
</evidence>
<evidence type="ECO:0000303" key="14">
    <source>
    </source>
</evidence>
<evidence type="ECO:0000305" key="15"/>
<evidence type="ECO:0007829" key="16">
    <source>
        <dbReference type="PDB" id="6I0Y"/>
    </source>
</evidence>
<evidence type="ECO:0007829" key="17">
    <source>
        <dbReference type="PDB" id="6XZ7"/>
    </source>
</evidence>
<evidence type="ECO:0007829" key="18">
    <source>
        <dbReference type="PDB" id="7BL5"/>
    </source>
</evidence>
<gene>
    <name evidence="1" type="primary">rplK</name>
    <name type="synonym">relC</name>
    <name type="ordered locus">b3983</name>
    <name type="ordered locus">JW3946</name>
</gene>
<protein>
    <recommendedName>
        <fullName evidence="1 14">Large ribosomal subunit protein uL11</fullName>
    </recommendedName>
    <alternativeName>
        <fullName>50S ribosomal protein L11</fullName>
    </alternativeName>
</protein>
<feature type="initiator methionine" description="Removed" evidence="13">
    <location>
        <position position="1"/>
    </location>
</feature>
<feature type="chain" id="PRO_0000104283" description="Large ribosomal subunit protein uL11">
    <location>
        <begin position="2"/>
        <end position="142"/>
    </location>
</feature>
<feature type="modified residue" description="N,N,N-trimethylalanine" evidence="13">
    <location>
        <position position="2"/>
    </location>
</feature>
<feature type="modified residue" description="N6,N6,N6-trimethyllysine" evidence="13">
    <location>
        <position position="4"/>
    </location>
</feature>
<feature type="modified residue" description="N6,N6,N6-trimethyllysine" evidence="13">
    <location>
        <position position="40"/>
    </location>
</feature>
<feature type="modified residue" description="N6-succinyllysine" evidence="7">
    <location>
        <position position="72"/>
    </location>
</feature>
<feature type="modified residue" description="N6-succinyllysine" evidence="7">
    <location>
        <position position="81"/>
    </location>
</feature>
<feature type="sequence conflict" description="In Ref. 1; CAA23621." evidence="15" ref="1">
    <original>T</original>
    <variation>S</variation>
    <location>
        <position position="132"/>
    </location>
</feature>
<feature type="strand" evidence="17">
    <location>
        <begin position="9"/>
        <end position="14"/>
    </location>
</feature>
<feature type="strand" evidence="18">
    <location>
        <begin position="15"/>
        <end position="17"/>
    </location>
</feature>
<feature type="turn" evidence="17">
    <location>
        <begin position="21"/>
        <end position="24"/>
    </location>
</feature>
<feature type="helix" evidence="17">
    <location>
        <begin position="25"/>
        <end position="29"/>
    </location>
</feature>
<feature type="turn" evidence="17">
    <location>
        <begin position="30"/>
        <end position="32"/>
    </location>
</feature>
<feature type="helix" evidence="17">
    <location>
        <begin position="35"/>
        <end position="46"/>
    </location>
</feature>
<feature type="strand" evidence="17">
    <location>
        <begin position="54"/>
        <end position="61"/>
    </location>
</feature>
<feature type="strand" evidence="16">
    <location>
        <begin position="62"/>
        <end position="66"/>
    </location>
</feature>
<feature type="strand" evidence="17">
    <location>
        <begin position="67"/>
        <end position="71"/>
    </location>
</feature>
<feature type="helix" evidence="17">
    <location>
        <begin position="76"/>
        <end position="83"/>
    </location>
</feature>
<feature type="strand" evidence="16">
    <location>
        <begin position="87"/>
        <end position="89"/>
    </location>
</feature>
<feature type="turn" evidence="17">
    <location>
        <begin position="93"/>
        <end position="95"/>
    </location>
</feature>
<feature type="helix" evidence="17">
    <location>
        <begin position="103"/>
        <end position="116"/>
    </location>
</feature>
<feature type="strand" evidence="18">
    <location>
        <begin position="118"/>
        <end position="120"/>
    </location>
</feature>
<feature type="helix" evidence="17">
    <location>
        <begin position="122"/>
        <end position="135"/>
    </location>
</feature>
<proteinExistence type="evidence at protein level"/>
<comment type="function">
    <text>Forms part of the ribosomal stalk which helps the ribosome interact with GTP-bound translation factors.</text>
</comment>
<comment type="subunit">
    <text evidence="2 3 4 5 6 8 9 10 11 12 13">Part of the ribosomal stalk of the 50S ribosomal subunit (PubMed:15923259). Interacts with L10 and the large rRNA to form the base of the stalk. L10 forms an elongated spine to which 2 L12 dimers bind in a sequential fashion forming a pentameric L10(L12)2(L12)2 complex (PubMed:15923259).</text>
</comment>
<comment type="interaction">
    <interactant intactId="EBI-547288">
        <id>P0A7J7</id>
    </interactant>
    <interactant intactId="EBI-1114349">
        <id>P0A805</id>
        <label>frr</label>
    </interactant>
    <organismsDiffer>false</organismsDiffer>
    <experiments>2</experiments>
</comment>
<comment type="interaction">
    <interactant intactId="EBI-547288">
        <id>P0A7J7</id>
    </interactant>
    <interactant intactId="EBI-556300">
        <id>P0A8T1</id>
        <label>prmA</label>
    </interactant>
    <organismsDiffer>false</organismsDiffer>
    <experiments>4</experiments>
</comment>
<comment type="mass spectrometry" mass="14870.2" method="MALDI" evidence="2"/>
<comment type="similarity">
    <text evidence="1">Belongs to the universal ribosomal protein uL11 family.</text>
</comment>
<dbReference type="EMBL" id="V00339">
    <property type="protein sequence ID" value="CAA23621.1"/>
    <property type="molecule type" value="Genomic_DNA"/>
</dbReference>
<dbReference type="EMBL" id="M30610">
    <property type="protein sequence ID" value="AAA24623.1"/>
    <property type="molecule type" value="Genomic_DNA"/>
</dbReference>
<dbReference type="EMBL" id="U00006">
    <property type="protein sequence ID" value="AAC43081.1"/>
    <property type="molecule type" value="Genomic_DNA"/>
</dbReference>
<dbReference type="EMBL" id="U00096">
    <property type="protein sequence ID" value="AAC76957.1"/>
    <property type="molecule type" value="Genomic_DNA"/>
</dbReference>
<dbReference type="EMBL" id="AP009048">
    <property type="protein sequence ID" value="BAE77337.1"/>
    <property type="molecule type" value="Genomic_DNA"/>
</dbReference>
<dbReference type="PIR" id="S12572">
    <property type="entry name" value="R5EC11"/>
</dbReference>
<dbReference type="RefSeq" id="NP_418410.1">
    <property type="nucleotide sequence ID" value="NC_000913.3"/>
</dbReference>
<dbReference type="RefSeq" id="WP_001085926.1">
    <property type="nucleotide sequence ID" value="NZ_STEB01000045.1"/>
</dbReference>
<dbReference type="PDB" id="1EG0">
    <property type="method" value="EM"/>
    <property type="resolution" value="11.50 A"/>
    <property type="chains" value="K=1-140"/>
</dbReference>
<dbReference type="PDB" id="1MJ1">
    <property type="method" value="EM"/>
    <property type="resolution" value="13.00 A"/>
    <property type="chains" value="L=1-141"/>
</dbReference>
<dbReference type="PDB" id="1ML5">
    <property type="method" value="EM"/>
    <property type="resolution" value="14.00 A"/>
    <property type="chains" value="l=1-141"/>
</dbReference>
<dbReference type="PDB" id="2J28">
    <property type="method" value="EM"/>
    <property type="resolution" value="8.00 A"/>
    <property type="chains" value="I=2-142"/>
</dbReference>
<dbReference type="PDB" id="2RDO">
    <property type="method" value="EM"/>
    <property type="resolution" value="9.10 A"/>
    <property type="chains" value="I=2-142"/>
</dbReference>
<dbReference type="PDB" id="3DEG">
    <property type="method" value="EM"/>
    <property type="chains" value="H=2-142"/>
</dbReference>
<dbReference type="PDB" id="3EP2">
    <property type="method" value="EM"/>
    <property type="chains" value="I=2-142"/>
</dbReference>
<dbReference type="PDB" id="3EQ3">
    <property type="method" value="EM"/>
    <property type="chains" value="I=2-142"/>
</dbReference>
<dbReference type="PDB" id="3EQ4">
    <property type="method" value="EM"/>
    <property type="chains" value="I=2-142"/>
</dbReference>
<dbReference type="PDB" id="3J0D">
    <property type="method" value="EM"/>
    <property type="resolution" value="11.10 A"/>
    <property type="chains" value="G=2-142"/>
</dbReference>
<dbReference type="PDB" id="3J5L">
    <property type="method" value="EM"/>
    <property type="resolution" value="6.60 A"/>
    <property type="chains" value="I=2-142"/>
</dbReference>
<dbReference type="PDB" id="3J7Z">
    <property type="method" value="EM"/>
    <property type="resolution" value="3.90 A"/>
    <property type="chains" value="I=1-142"/>
</dbReference>
<dbReference type="PDB" id="3J8G">
    <property type="method" value="EM"/>
    <property type="resolution" value="5.00 A"/>
    <property type="chains" value="I=1-142"/>
</dbReference>
<dbReference type="PDB" id="3J9Y">
    <property type="method" value="EM"/>
    <property type="resolution" value="3.90 A"/>
    <property type="chains" value="I=1-142"/>
</dbReference>
<dbReference type="PDB" id="3J9Z">
    <property type="method" value="EM"/>
    <property type="resolution" value="3.60 A"/>
    <property type="chains" value="LE=2-142"/>
</dbReference>
<dbReference type="PDB" id="3JA1">
    <property type="method" value="EM"/>
    <property type="resolution" value="3.60 A"/>
    <property type="chains" value="LK=2-142"/>
</dbReference>
<dbReference type="PDB" id="3JBV">
    <property type="method" value="EM"/>
    <property type="resolution" value="3.32 A"/>
    <property type="chains" value="i=1-142"/>
</dbReference>
<dbReference type="PDB" id="3JCD">
    <property type="method" value="EM"/>
    <property type="resolution" value="3.70 A"/>
    <property type="chains" value="I=1-142"/>
</dbReference>
<dbReference type="PDB" id="3JCE">
    <property type="method" value="EM"/>
    <property type="resolution" value="3.20 A"/>
    <property type="chains" value="I=1-142"/>
</dbReference>
<dbReference type="PDB" id="3JCJ">
    <property type="method" value="EM"/>
    <property type="resolution" value="3.70 A"/>
    <property type="chains" value="H=1-142"/>
</dbReference>
<dbReference type="PDB" id="3JCN">
    <property type="method" value="EM"/>
    <property type="resolution" value="4.60 A"/>
    <property type="chains" value="I=1-142"/>
</dbReference>
<dbReference type="PDB" id="487D">
    <property type="method" value="EM"/>
    <property type="resolution" value="7.50 A"/>
    <property type="chains" value="L=10-86"/>
</dbReference>
<dbReference type="PDB" id="4CSU">
    <property type="method" value="EM"/>
    <property type="resolution" value="5.50 A"/>
    <property type="chains" value="I=2-142"/>
</dbReference>
<dbReference type="PDB" id="4U1U">
    <property type="method" value="X-ray"/>
    <property type="resolution" value="2.95 A"/>
    <property type="chains" value="BI/DI=2-142"/>
</dbReference>
<dbReference type="PDB" id="4U1V">
    <property type="method" value="X-ray"/>
    <property type="resolution" value="3.00 A"/>
    <property type="chains" value="BI/DI=2-142"/>
</dbReference>
<dbReference type="PDB" id="4U20">
    <property type="method" value="X-ray"/>
    <property type="resolution" value="2.90 A"/>
    <property type="chains" value="BI/DI=2-142"/>
</dbReference>
<dbReference type="PDB" id="4U24">
    <property type="method" value="X-ray"/>
    <property type="resolution" value="2.90 A"/>
    <property type="chains" value="BI/DI=2-142"/>
</dbReference>
<dbReference type="PDB" id="4U25">
    <property type="method" value="X-ray"/>
    <property type="resolution" value="2.90 A"/>
    <property type="chains" value="BI/DI=2-142"/>
</dbReference>
<dbReference type="PDB" id="4U26">
    <property type="method" value="X-ray"/>
    <property type="resolution" value="2.80 A"/>
    <property type="chains" value="BI/DI=2-142"/>
</dbReference>
<dbReference type="PDB" id="4U27">
    <property type="method" value="X-ray"/>
    <property type="resolution" value="2.80 A"/>
    <property type="chains" value="BI/DI=2-142"/>
</dbReference>
<dbReference type="PDB" id="4UY8">
    <property type="method" value="EM"/>
    <property type="resolution" value="3.80 A"/>
    <property type="chains" value="I=2-142"/>
</dbReference>
<dbReference type="PDB" id="4V47">
    <property type="method" value="EM"/>
    <property type="resolution" value="12.30 A"/>
    <property type="chains" value="AG=2-142"/>
</dbReference>
<dbReference type="PDB" id="4V48">
    <property type="method" value="EM"/>
    <property type="resolution" value="11.50 A"/>
    <property type="chains" value="AG=2-142"/>
</dbReference>
<dbReference type="PDB" id="4V4H">
    <property type="method" value="X-ray"/>
    <property type="resolution" value="3.46 A"/>
    <property type="chains" value="BI/DI=1-142"/>
</dbReference>
<dbReference type="PDB" id="4V4Q">
    <property type="method" value="X-ray"/>
    <property type="resolution" value="3.46 A"/>
    <property type="chains" value="BI/DI=2-142"/>
</dbReference>
<dbReference type="PDB" id="4V4V">
    <property type="method" value="EM"/>
    <property type="resolution" value="15.00 A"/>
    <property type="chains" value="BG=3-141"/>
</dbReference>
<dbReference type="PDB" id="4V4W">
    <property type="method" value="EM"/>
    <property type="resolution" value="15.00 A"/>
    <property type="chains" value="BG=3-141"/>
</dbReference>
<dbReference type="PDB" id="4V50">
    <property type="method" value="X-ray"/>
    <property type="resolution" value="3.22 A"/>
    <property type="chains" value="BI/DI=2-142"/>
</dbReference>
<dbReference type="PDB" id="4V52">
    <property type="method" value="X-ray"/>
    <property type="resolution" value="3.21 A"/>
    <property type="chains" value="BI/DI=2-142"/>
</dbReference>
<dbReference type="PDB" id="4V53">
    <property type="method" value="X-ray"/>
    <property type="resolution" value="3.54 A"/>
    <property type="chains" value="BI/DI=2-142"/>
</dbReference>
<dbReference type="PDB" id="4V54">
    <property type="method" value="X-ray"/>
    <property type="resolution" value="3.30 A"/>
    <property type="chains" value="BI/DI=2-142"/>
</dbReference>
<dbReference type="PDB" id="4V55">
    <property type="method" value="X-ray"/>
    <property type="resolution" value="4.00 A"/>
    <property type="chains" value="BI/DI=2-142"/>
</dbReference>
<dbReference type="PDB" id="4V56">
    <property type="method" value="X-ray"/>
    <property type="resolution" value="3.93 A"/>
    <property type="chains" value="BI/DI=2-142"/>
</dbReference>
<dbReference type="PDB" id="4V57">
    <property type="method" value="X-ray"/>
    <property type="resolution" value="3.50 A"/>
    <property type="chains" value="BI/DI=2-142"/>
</dbReference>
<dbReference type="PDB" id="4V5B">
    <property type="method" value="X-ray"/>
    <property type="resolution" value="3.74 A"/>
    <property type="chains" value="AI/CI=2-142"/>
</dbReference>
<dbReference type="PDB" id="4V5H">
    <property type="method" value="EM"/>
    <property type="resolution" value="5.80 A"/>
    <property type="chains" value="BI=2-142"/>
</dbReference>
<dbReference type="PDB" id="4V5Y">
    <property type="method" value="X-ray"/>
    <property type="resolution" value="4.45 A"/>
    <property type="chains" value="BI/DI=2-142"/>
</dbReference>
<dbReference type="PDB" id="4V64">
    <property type="method" value="X-ray"/>
    <property type="resolution" value="3.50 A"/>
    <property type="chains" value="BI/DI=2-142"/>
</dbReference>
<dbReference type="PDB" id="4V65">
    <property type="method" value="EM"/>
    <property type="resolution" value="9.00 A"/>
    <property type="chains" value="B5=1-142"/>
</dbReference>
<dbReference type="PDB" id="4V66">
    <property type="method" value="EM"/>
    <property type="resolution" value="9.00 A"/>
    <property type="chains" value="B5=1-142"/>
</dbReference>
<dbReference type="PDB" id="4V69">
    <property type="method" value="EM"/>
    <property type="resolution" value="6.70 A"/>
    <property type="chains" value="BI=2-142"/>
</dbReference>
<dbReference type="PDB" id="4V6C">
    <property type="method" value="X-ray"/>
    <property type="resolution" value="3.19 A"/>
    <property type="chains" value="BI/DI=1-142"/>
</dbReference>
<dbReference type="PDB" id="4V6D">
    <property type="method" value="X-ray"/>
    <property type="resolution" value="3.81 A"/>
    <property type="chains" value="BI/DI=1-142"/>
</dbReference>
<dbReference type="PDB" id="4V6E">
    <property type="method" value="X-ray"/>
    <property type="resolution" value="3.71 A"/>
    <property type="chains" value="BI/DI=1-142"/>
</dbReference>
<dbReference type="PDB" id="4V6K">
    <property type="method" value="EM"/>
    <property type="resolution" value="8.25 A"/>
    <property type="chains" value="AJ=1-142"/>
</dbReference>
<dbReference type="PDB" id="4V6L">
    <property type="method" value="EM"/>
    <property type="resolution" value="13.20 A"/>
    <property type="chains" value="BJ=1-142"/>
</dbReference>
<dbReference type="PDB" id="4V6M">
    <property type="method" value="EM"/>
    <property type="resolution" value="7.10 A"/>
    <property type="chains" value="BI=2-142"/>
</dbReference>
<dbReference type="PDB" id="4V6N">
    <property type="method" value="EM"/>
    <property type="resolution" value="12.10 A"/>
    <property type="chains" value="AK=2-142"/>
</dbReference>
<dbReference type="PDB" id="4V6O">
    <property type="method" value="EM"/>
    <property type="resolution" value="14.70 A"/>
    <property type="chains" value="BK=2-142"/>
</dbReference>
<dbReference type="PDB" id="4V6P">
    <property type="method" value="EM"/>
    <property type="resolution" value="13.50 A"/>
    <property type="chains" value="BK=2-142"/>
</dbReference>
<dbReference type="PDB" id="4V6Q">
    <property type="method" value="EM"/>
    <property type="resolution" value="11.50 A"/>
    <property type="chains" value="BK=2-142"/>
</dbReference>
<dbReference type="PDB" id="4V6R">
    <property type="method" value="EM"/>
    <property type="resolution" value="11.50 A"/>
    <property type="chains" value="BK=2-142"/>
</dbReference>
<dbReference type="PDB" id="4V6S">
    <property type="method" value="EM"/>
    <property type="resolution" value="13.10 A"/>
    <property type="chains" value="AK=2-142"/>
</dbReference>
<dbReference type="PDB" id="4V6T">
    <property type="method" value="EM"/>
    <property type="resolution" value="8.30 A"/>
    <property type="chains" value="BI=2-142"/>
</dbReference>
<dbReference type="PDB" id="4V6V">
    <property type="method" value="EM"/>
    <property type="resolution" value="9.80 A"/>
    <property type="chains" value="BK=2-142"/>
</dbReference>
<dbReference type="PDB" id="4V6Y">
    <property type="method" value="EM"/>
    <property type="resolution" value="12.00 A"/>
    <property type="chains" value="BI=1-142"/>
</dbReference>
<dbReference type="PDB" id="4V6Z">
    <property type="method" value="EM"/>
    <property type="resolution" value="12.00 A"/>
    <property type="chains" value="BI=1-142"/>
</dbReference>
<dbReference type="PDB" id="4V70">
    <property type="method" value="EM"/>
    <property type="resolution" value="17.00 A"/>
    <property type="chains" value="BI=1-142"/>
</dbReference>
<dbReference type="PDB" id="4V71">
    <property type="method" value="EM"/>
    <property type="resolution" value="20.00 A"/>
    <property type="chains" value="BI=1-142"/>
</dbReference>
<dbReference type="PDB" id="4V72">
    <property type="method" value="EM"/>
    <property type="resolution" value="13.00 A"/>
    <property type="chains" value="BI=1-142"/>
</dbReference>
<dbReference type="PDB" id="4V73">
    <property type="method" value="EM"/>
    <property type="resolution" value="15.00 A"/>
    <property type="chains" value="BI=1-142"/>
</dbReference>
<dbReference type="PDB" id="4V74">
    <property type="method" value="EM"/>
    <property type="resolution" value="17.00 A"/>
    <property type="chains" value="BI=1-142"/>
</dbReference>
<dbReference type="PDB" id="4V75">
    <property type="method" value="EM"/>
    <property type="resolution" value="12.00 A"/>
    <property type="chains" value="BI=1-142"/>
</dbReference>
<dbReference type="PDB" id="4V76">
    <property type="method" value="EM"/>
    <property type="resolution" value="17.00 A"/>
    <property type="chains" value="BI=1-142"/>
</dbReference>
<dbReference type="PDB" id="4V77">
    <property type="method" value="EM"/>
    <property type="resolution" value="17.00 A"/>
    <property type="chains" value="BI=1-142"/>
</dbReference>
<dbReference type="PDB" id="4V78">
    <property type="method" value="EM"/>
    <property type="resolution" value="20.00 A"/>
    <property type="chains" value="BI=1-142"/>
</dbReference>
<dbReference type="PDB" id="4V79">
    <property type="method" value="EM"/>
    <property type="resolution" value="15.00 A"/>
    <property type="chains" value="BI=1-142"/>
</dbReference>
<dbReference type="PDB" id="4V7A">
    <property type="method" value="EM"/>
    <property type="resolution" value="9.00 A"/>
    <property type="chains" value="BI=1-142"/>
</dbReference>
<dbReference type="PDB" id="4V7B">
    <property type="method" value="EM"/>
    <property type="resolution" value="6.80 A"/>
    <property type="chains" value="BI=1-142"/>
</dbReference>
<dbReference type="PDB" id="4V7C">
    <property type="method" value="EM"/>
    <property type="resolution" value="7.60 A"/>
    <property type="chains" value="BK=2-142"/>
</dbReference>
<dbReference type="PDB" id="4V7D">
    <property type="method" value="EM"/>
    <property type="resolution" value="7.60 A"/>
    <property type="chains" value="AK=2-142"/>
</dbReference>
<dbReference type="PDB" id="4V7I">
    <property type="method" value="EM"/>
    <property type="resolution" value="9.60 A"/>
    <property type="chains" value="AI=1-142"/>
</dbReference>
<dbReference type="PDB" id="4V7S">
    <property type="method" value="X-ray"/>
    <property type="resolution" value="3.25 A"/>
    <property type="chains" value="BI/DI=2-142"/>
</dbReference>
<dbReference type="PDB" id="4V7T">
    <property type="method" value="X-ray"/>
    <property type="resolution" value="3.19 A"/>
    <property type="chains" value="BI/DI=2-142"/>
</dbReference>
<dbReference type="PDB" id="4V7U">
    <property type="method" value="X-ray"/>
    <property type="resolution" value="3.10 A"/>
    <property type="chains" value="BI/DI=2-142"/>
</dbReference>
<dbReference type="PDB" id="4V7V">
    <property type="method" value="X-ray"/>
    <property type="resolution" value="3.29 A"/>
    <property type="chains" value="BI/DI=2-142"/>
</dbReference>
<dbReference type="PDB" id="4V85">
    <property type="method" value="X-ray"/>
    <property type="resolution" value="3.20 A"/>
    <property type="chains" value="BI=1-142"/>
</dbReference>
<dbReference type="PDB" id="4V89">
    <property type="method" value="X-ray"/>
    <property type="resolution" value="3.70 A"/>
    <property type="chains" value="BI=1-142"/>
</dbReference>
<dbReference type="PDB" id="4V9C">
    <property type="method" value="X-ray"/>
    <property type="resolution" value="3.30 A"/>
    <property type="chains" value="BI/DI=1-142"/>
</dbReference>
<dbReference type="PDB" id="4V9D">
    <property type="method" value="X-ray"/>
    <property type="resolution" value="3.00 A"/>
    <property type="chains" value="CI/DI=2-142"/>
</dbReference>
<dbReference type="PDB" id="4V9O">
    <property type="method" value="X-ray"/>
    <property type="resolution" value="2.90 A"/>
    <property type="chains" value="AI/CI/EI/GI=1-142"/>
</dbReference>
<dbReference type="PDB" id="4V9P">
    <property type="method" value="X-ray"/>
    <property type="resolution" value="2.90 A"/>
    <property type="chains" value="AI/CI/EI/GI=1-142"/>
</dbReference>
<dbReference type="PDB" id="4WF1">
    <property type="method" value="X-ray"/>
    <property type="resolution" value="3.09 A"/>
    <property type="chains" value="BI/DI=2-142"/>
</dbReference>
<dbReference type="PDB" id="4WOI">
    <property type="method" value="X-ray"/>
    <property type="resolution" value="3.00 A"/>
    <property type="chains" value="BI/CI=1-142"/>
</dbReference>
<dbReference type="PDB" id="4WWW">
    <property type="method" value="X-ray"/>
    <property type="resolution" value="3.10 A"/>
    <property type="chains" value="RI/YI=2-142"/>
</dbReference>
<dbReference type="PDB" id="4YBB">
    <property type="method" value="X-ray"/>
    <property type="resolution" value="2.10 A"/>
    <property type="chains" value="CJ/DJ=8-141"/>
</dbReference>
<dbReference type="PDB" id="5ADY">
    <property type="method" value="EM"/>
    <property type="resolution" value="4.50 A"/>
    <property type="chains" value="I=1-142"/>
</dbReference>
<dbReference type="PDB" id="5AFI">
    <property type="method" value="EM"/>
    <property type="resolution" value="2.90 A"/>
    <property type="chains" value="I=1-142"/>
</dbReference>
<dbReference type="PDB" id="5AKA">
    <property type="method" value="EM"/>
    <property type="resolution" value="5.70 A"/>
    <property type="chains" value="I=2-142"/>
</dbReference>
<dbReference type="PDB" id="5GAD">
    <property type="method" value="EM"/>
    <property type="resolution" value="3.70 A"/>
    <property type="chains" value="J=1-142"/>
</dbReference>
<dbReference type="PDB" id="5GAE">
    <property type="method" value="EM"/>
    <property type="resolution" value="3.33 A"/>
    <property type="chains" value="J=1-142"/>
</dbReference>
<dbReference type="PDB" id="5GAF">
    <property type="method" value="EM"/>
    <property type="resolution" value="4.30 A"/>
    <property type="chains" value="J=8-141"/>
</dbReference>
<dbReference type="PDB" id="5GAG">
    <property type="method" value="EM"/>
    <property type="resolution" value="3.80 A"/>
    <property type="chains" value="J=1-142"/>
</dbReference>
<dbReference type="PDB" id="5GAH">
    <property type="method" value="EM"/>
    <property type="resolution" value="3.80 A"/>
    <property type="chains" value="J=1-142"/>
</dbReference>
<dbReference type="PDB" id="5H5U">
    <property type="method" value="EM"/>
    <property type="resolution" value="3.00 A"/>
    <property type="chains" value="J=2-142"/>
</dbReference>
<dbReference type="PDB" id="5IQR">
    <property type="method" value="EM"/>
    <property type="resolution" value="3.00 A"/>
    <property type="chains" value="I=1-142"/>
</dbReference>
<dbReference type="PDB" id="5IT8">
    <property type="method" value="X-ray"/>
    <property type="resolution" value="3.12 A"/>
    <property type="chains" value="CJ/DJ=8-141"/>
</dbReference>
<dbReference type="PDB" id="5J5B">
    <property type="method" value="X-ray"/>
    <property type="resolution" value="2.80 A"/>
    <property type="chains" value="CJ/DJ=8-141"/>
</dbReference>
<dbReference type="PDB" id="5J7L">
    <property type="method" value="X-ray"/>
    <property type="resolution" value="3.00 A"/>
    <property type="chains" value="CJ/DJ=8-141"/>
</dbReference>
<dbReference type="PDB" id="5J88">
    <property type="method" value="X-ray"/>
    <property type="resolution" value="3.32 A"/>
    <property type="chains" value="CJ/DJ=8-142"/>
</dbReference>
<dbReference type="PDB" id="5J8A">
    <property type="method" value="X-ray"/>
    <property type="resolution" value="3.10 A"/>
    <property type="chains" value="CJ/DJ=8-142"/>
</dbReference>
<dbReference type="PDB" id="5J91">
    <property type="method" value="X-ray"/>
    <property type="resolution" value="2.96 A"/>
    <property type="chains" value="CJ/DJ=8-141"/>
</dbReference>
<dbReference type="PDB" id="5JC9">
    <property type="method" value="X-ray"/>
    <property type="resolution" value="3.03 A"/>
    <property type="chains" value="CJ/DJ=8-141"/>
</dbReference>
<dbReference type="PDB" id="5JTE">
    <property type="method" value="EM"/>
    <property type="resolution" value="3.60 A"/>
    <property type="chains" value="BI=1-142"/>
</dbReference>
<dbReference type="PDB" id="5JU8">
    <property type="method" value="EM"/>
    <property type="resolution" value="3.60 A"/>
    <property type="chains" value="BI=1-142"/>
</dbReference>
<dbReference type="PDB" id="5KCR">
    <property type="method" value="EM"/>
    <property type="resolution" value="3.60 A"/>
    <property type="chains" value="1K=1-142"/>
</dbReference>
<dbReference type="PDB" id="5KCS">
    <property type="method" value="EM"/>
    <property type="resolution" value="3.90 A"/>
    <property type="chains" value="1K=1-142"/>
</dbReference>
<dbReference type="PDB" id="5KPS">
    <property type="method" value="EM"/>
    <property type="resolution" value="3.90 A"/>
    <property type="chains" value="I=1-142"/>
</dbReference>
<dbReference type="PDB" id="5KPV">
    <property type="method" value="EM"/>
    <property type="resolution" value="4.10 A"/>
    <property type="chains" value="H=1-142"/>
</dbReference>
<dbReference type="PDB" id="5KPW">
    <property type="method" value="EM"/>
    <property type="resolution" value="3.90 A"/>
    <property type="chains" value="H=1-142"/>
</dbReference>
<dbReference type="PDB" id="5KPX">
    <property type="method" value="EM"/>
    <property type="resolution" value="3.90 A"/>
    <property type="chains" value="H=1-142"/>
</dbReference>
<dbReference type="PDB" id="5L3P">
    <property type="method" value="EM"/>
    <property type="resolution" value="3.70 A"/>
    <property type="chains" value="K=1-142"/>
</dbReference>
<dbReference type="PDB" id="5LZA">
    <property type="method" value="EM"/>
    <property type="resolution" value="3.60 A"/>
    <property type="chains" value="I=2-142"/>
</dbReference>
<dbReference type="PDB" id="5LZB">
    <property type="method" value="EM"/>
    <property type="resolution" value="5.30 A"/>
    <property type="chains" value="I=2-142"/>
</dbReference>
<dbReference type="PDB" id="5LZC">
    <property type="method" value="EM"/>
    <property type="resolution" value="4.80 A"/>
    <property type="chains" value="I=2-142"/>
</dbReference>
<dbReference type="PDB" id="5LZD">
    <property type="method" value="EM"/>
    <property type="resolution" value="3.40 A"/>
    <property type="chains" value="I=2-142"/>
</dbReference>
<dbReference type="PDB" id="5LZE">
    <property type="method" value="EM"/>
    <property type="resolution" value="3.50 A"/>
    <property type="chains" value="I=2-142"/>
</dbReference>
<dbReference type="PDB" id="5LZF">
    <property type="method" value="EM"/>
    <property type="resolution" value="4.60 A"/>
    <property type="chains" value="I=2-142"/>
</dbReference>
<dbReference type="PDB" id="5MDV">
    <property type="method" value="EM"/>
    <property type="resolution" value="2.97 A"/>
    <property type="chains" value="I=1-142"/>
</dbReference>
<dbReference type="PDB" id="5MDW">
    <property type="method" value="EM"/>
    <property type="resolution" value="3.06 A"/>
    <property type="chains" value="I=1-142"/>
</dbReference>
<dbReference type="PDB" id="5MDY">
    <property type="method" value="EM"/>
    <property type="resolution" value="3.35 A"/>
    <property type="chains" value="I=1-142"/>
</dbReference>
<dbReference type="PDB" id="5MDZ">
    <property type="method" value="EM"/>
    <property type="resolution" value="3.10 A"/>
    <property type="chains" value="I=1-142"/>
</dbReference>
<dbReference type="PDB" id="5NCO">
    <property type="method" value="EM"/>
    <property type="resolution" value="4.80 A"/>
    <property type="chains" value="J=8-141"/>
</dbReference>
<dbReference type="PDB" id="5NP6">
    <property type="method" value="EM"/>
    <property type="resolution" value="3.60 A"/>
    <property type="chains" value="g=2-142"/>
</dbReference>
<dbReference type="PDB" id="5NWY">
    <property type="method" value="EM"/>
    <property type="resolution" value="2.93 A"/>
    <property type="chains" value="V=1-142"/>
</dbReference>
<dbReference type="PDB" id="5O2R">
    <property type="method" value="EM"/>
    <property type="resolution" value="3.40 A"/>
    <property type="chains" value="I=2-142"/>
</dbReference>
<dbReference type="PDB" id="5U4I">
    <property type="method" value="EM"/>
    <property type="resolution" value="3.50 A"/>
    <property type="chains" value="J=1-142"/>
</dbReference>
<dbReference type="PDB" id="5U9F">
    <property type="method" value="EM"/>
    <property type="resolution" value="3.20 A"/>
    <property type="chains" value="11=1-142"/>
</dbReference>
<dbReference type="PDB" id="5U9G">
    <property type="method" value="EM"/>
    <property type="resolution" value="3.20 A"/>
    <property type="chains" value="11=1-142"/>
</dbReference>
<dbReference type="PDB" id="5UYK">
    <property type="method" value="EM"/>
    <property type="resolution" value="3.90 A"/>
    <property type="chains" value="11=2-142"/>
</dbReference>
<dbReference type="PDB" id="5UYL">
    <property type="method" value="EM"/>
    <property type="resolution" value="3.60 A"/>
    <property type="chains" value="11=2-142"/>
</dbReference>
<dbReference type="PDB" id="5UYM">
    <property type="method" value="EM"/>
    <property type="resolution" value="3.20 A"/>
    <property type="chains" value="11=2-142"/>
</dbReference>
<dbReference type="PDB" id="5UYN">
    <property type="method" value="EM"/>
    <property type="resolution" value="4.00 A"/>
    <property type="chains" value="11=2-142"/>
</dbReference>
<dbReference type="PDB" id="5UYP">
    <property type="method" value="EM"/>
    <property type="resolution" value="3.90 A"/>
    <property type="chains" value="11=2-142"/>
</dbReference>
<dbReference type="PDB" id="5UYQ">
    <property type="method" value="EM"/>
    <property type="resolution" value="3.80 A"/>
    <property type="chains" value="11=2-142"/>
</dbReference>
<dbReference type="PDB" id="5WDT">
    <property type="method" value="EM"/>
    <property type="resolution" value="3.00 A"/>
    <property type="chains" value="I=2-142"/>
</dbReference>
<dbReference type="PDB" id="5WE4">
    <property type="method" value="EM"/>
    <property type="resolution" value="3.10 A"/>
    <property type="chains" value="I=2-142"/>
</dbReference>
<dbReference type="PDB" id="5WE6">
    <property type="method" value="EM"/>
    <property type="resolution" value="3.40 A"/>
    <property type="chains" value="I=2-142"/>
</dbReference>
<dbReference type="PDB" id="5WF0">
    <property type="method" value="EM"/>
    <property type="resolution" value="3.60 A"/>
    <property type="chains" value="I=2-142"/>
</dbReference>
<dbReference type="PDB" id="5WFK">
    <property type="method" value="EM"/>
    <property type="resolution" value="3.40 A"/>
    <property type="chains" value="I=2-142"/>
</dbReference>
<dbReference type="PDB" id="5WFS">
    <property type="method" value="EM"/>
    <property type="resolution" value="3.00 A"/>
    <property type="chains" value="I=2-142"/>
</dbReference>
<dbReference type="PDB" id="6BU8">
    <property type="method" value="EM"/>
    <property type="resolution" value="3.50 A"/>
    <property type="chains" value="11=2-142"/>
</dbReference>
<dbReference type="PDB" id="6BY1">
    <property type="method" value="X-ray"/>
    <property type="resolution" value="3.94 A"/>
    <property type="chains" value="CI/DI=71-142"/>
</dbReference>
<dbReference type="PDB" id="6C4I">
    <property type="method" value="EM"/>
    <property type="resolution" value="3.24 A"/>
    <property type="chains" value="J=1-142"/>
</dbReference>
<dbReference type="PDB" id="6DNC">
    <property type="method" value="EM"/>
    <property type="resolution" value="3.70 A"/>
    <property type="chains" value="M=1-142"/>
</dbReference>
<dbReference type="PDB" id="6GWT">
    <property type="method" value="EM"/>
    <property type="resolution" value="3.80 A"/>
    <property type="chains" value="I=2-142"/>
</dbReference>
<dbReference type="PDB" id="6GXM">
    <property type="method" value="EM"/>
    <property type="resolution" value="3.80 A"/>
    <property type="chains" value="I=2-142"/>
</dbReference>
<dbReference type="PDB" id="6GXN">
    <property type="method" value="EM"/>
    <property type="resolution" value="3.90 A"/>
    <property type="chains" value="I=2-142"/>
</dbReference>
<dbReference type="PDB" id="6GXO">
    <property type="method" value="EM"/>
    <property type="resolution" value="3.90 A"/>
    <property type="chains" value="I=2-142"/>
</dbReference>
<dbReference type="PDB" id="6GXP">
    <property type="method" value="EM"/>
    <property type="resolution" value="4.40 A"/>
    <property type="chains" value="I=2-142"/>
</dbReference>
<dbReference type="PDB" id="6HRM">
    <property type="method" value="EM"/>
    <property type="resolution" value="2.96 A"/>
    <property type="chains" value="I=6-140"/>
</dbReference>
<dbReference type="PDB" id="6I0Y">
    <property type="method" value="EM"/>
    <property type="resolution" value="3.20 A"/>
    <property type="chains" value="I=2-142"/>
</dbReference>
<dbReference type="PDB" id="6I7V">
    <property type="method" value="X-ray"/>
    <property type="resolution" value="2.90 A"/>
    <property type="chains" value="CJ/DJ=2-142"/>
</dbReference>
<dbReference type="PDB" id="6O9J">
    <property type="method" value="EM"/>
    <property type="resolution" value="3.90 A"/>
    <property type="chains" value="6=2-142"/>
</dbReference>
<dbReference type="PDB" id="6O9K">
    <property type="method" value="EM"/>
    <property type="resolution" value="4.00 A"/>
    <property type="chains" value="I=2-142"/>
</dbReference>
<dbReference type="PDB" id="6PJ6">
    <property type="method" value="EM"/>
    <property type="resolution" value="2.20 A"/>
    <property type="chains" value="Q=8-141"/>
</dbReference>
<dbReference type="PDB" id="6Q97">
    <property type="method" value="EM"/>
    <property type="resolution" value="3.90 A"/>
    <property type="chains" value="I=6-140"/>
</dbReference>
<dbReference type="PDB" id="6Q98">
    <property type="method" value="EM"/>
    <property type="resolution" value="4.30 A"/>
    <property type="chains" value="I=1-142"/>
</dbReference>
<dbReference type="PDB" id="6Q9A">
    <property type="method" value="EM"/>
    <property type="resolution" value="3.70 A"/>
    <property type="chains" value="I=6-140"/>
</dbReference>
<dbReference type="PDB" id="6S0K">
    <property type="method" value="EM"/>
    <property type="resolution" value="3.10 A"/>
    <property type="chains" value="J=1-142"/>
</dbReference>
<dbReference type="PDB" id="6U48">
    <property type="method" value="EM"/>
    <property type="resolution" value="2.87 A"/>
    <property type="chains" value="CJ=8-141"/>
</dbReference>
<dbReference type="PDB" id="6VU3">
    <property type="method" value="EM"/>
    <property type="resolution" value="3.70 A"/>
    <property type="chains" value="Y=2-142"/>
</dbReference>
<dbReference type="PDB" id="6VYQ">
    <property type="method" value="EM"/>
    <property type="resolution" value="3.70 A"/>
    <property type="chains" value="Y=1-142"/>
</dbReference>
<dbReference type="PDB" id="6VYR">
    <property type="method" value="EM"/>
    <property type="resolution" value="3.80 A"/>
    <property type="chains" value="Y=1-142"/>
</dbReference>
<dbReference type="PDB" id="6VYS">
    <property type="method" value="EM"/>
    <property type="resolution" value="3.70 A"/>
    <property type="chains" value="Y=1-142"/>
</dbReference>
<dbReference type="PDB" id="6VZJ">
    <property type="method" value="EM"/>
    <property type="resolution" value="4.10 A"/>
    <property type="chains" value="Y=2-142"/>
</dbReference>
<dbReference type="PDB" id="6WD0">
    <property type="method" value="EM"/>
    <property type="resolution" value="3.00 A"/>
    <property type="chains" value="i=2-142"/>
</dbReference>
<dbReference type="PDB" id="6WD1">
    <property type="method" value="EM"/>
    <property type="resolution" value="3.30 A"/>
    <property type="chains" value="i=2-142"/>
</dbReference>
<dbReference type="PDB" id="6WD2">
    <property type="method" value="EM"/>
    <property type="resolution" value="3.60 A"/>
    <property type="chains" value="i=2-142"/>
</dbReference>
<dbReference type="PDB" id="6WD3">
    <property type="method" value="EM"/>
    <property type="resolution" value="3.60 A"/>
    <property type="chains" value="i=2-142"/>
</dbReference>
<dbReference type="PDB" id="6WD4">
    <property type="method" value="EM"/>
    <property type="resolution" value="3.70 A"/>
    <property type="chains" value="i=2-142"/>
</dbReference>
<dbReference type="PDB" id="6WD5">
    <property type="method" value="EM"/>
    <property type="resolution" value="3.60 A"/>
    <property type="chains" value="i=2-142"/>
</dbReference>
<dbReference type="PDB" id="6WD6">
    <property type="method" value="EM"/>
    <property type="resolution" value="3.70 A"/>
    <property type="chains" value="i=2-142"/>
</dbReference>
<dbReference type="PDB" id="6WD7">
    <property type="method" value="EM"/>
    <property type="resolution" value="3.90 A"/>
    <property type="chains" value="i=2-142"/>
</dbReference>
<dbReference type="PDB" id="6WD8">
    <property type="method" value="EM"/>
    <property type="resolution" value="3.70 A"/>
    <property type="chains" value="i=2-142"/>
</dbReference>
<dbReference type="PDB" id="6WD9">
    <property type="method" value="EM"/>
    <property type="resolution" value="3.70 A"/>
    <property type="chains" value="i=2-142"/>
</dbReference>
<dbReference type="PDB" id="6WDA">
    <property type="method" value="EM"/>
    <property type="resolution" value="3.80 A"/>
    <property type="chains" value="i=2-142"/>
</dbReference>
<dbReference type="PDB" id="6WDB">
    <property type="method" value="EM"/>
    <property type="resolution" value="4.00 A"/>
    <property type="chains" value="i=2-142"/>
</dbReference>
<dbReference type="PDB" id="6WDC">
    <property type="method" value="EM"/>
    <property type="resolution" value="4.20 A"/>
    <property type="chains" value="i=2-142"/>
</dbReference>
<dbReference type="PDB" id="6WDD">
    <property type="method" value="EM"/>
    <property type="resolution" value="3.20 A"/>
    <property type="chains" value="i=2-142"/>
</dbReference>
<dbReference type="PDB" id="6WDE">
    <property type="method" value="EM"/>
    <property type="resolution" value="3.00 A"/>
    <property type="chains" value="i=2-142"/>
</dbReference>
<dbReference type="PDB" id="6WDF">
    <property type="method" value="EM"/>
    <property type="resolution" value="3.30 A"/>
    <property type="chains" value="i=2-142"/>
</dbReference>
<dbReference type="PDB" id="6WDG">
    <property type="method" value="EM"/>
    <property type="resolution" value="3.30 A"/>
    <property type="chains" value="i=2-142"/>
</dbReference>
<dbReference type="PDB" id="6WDH">
    <property type="method" value="EM"/>
    <property type="resolution" value="4.30 A"/>
    <property type="chains" value="i=2-142"/>
</dbReference>
<dbReference type="PDB" id="6WDI">
    <property type="method" value="EM"/>
    <property type="resolution" value="4.00 A"/>
    <property type="chains" value="i=2-142"/>
</dbReference>
<dbReference type="PDB" id="6WDJ">
    <property type="method" value="EM"/>
    <property type="resolution" value="3.70 A"/>
    <property type="chains" value="i=2-142"/>
</dbReference>
<dbReference type="PDB" id="6WDK">
    <property type="method" value="EM"/>
    <property type="resolution" value="3.60 A"/>
    <property type="chains" value="i=2-142"/>
</dbReference>
<dbReference type="PDB" id="6WDL">
    <property type="method" value="EM"/>
    <property type="resolution" value="3.70 A"/>
    <property type="chains" value="i=2-142"/>
</dbReference>
<dbReference type="PDB" id="6WDM">
    <property type="method" value="EM"/>
    <property type="resolution" value="3.60 A"/>
    <property type="chains" value="i=2-142"/>
</dbReference>
<dbReference type="PDB" id="6WNT">
    <property type="method" value="EM"/>
    <property type="resolution" value="3.10 A"/>
    <property type="chains" value="i=2-142"/>
</dbReference>
<dbReference type="PDB" id="6WNV">
    <property type="method" value="EM"/>
    <property type="resolution" value="3.50 A"/>
    <property type="chains" value="i=2-142"/>
</dbReference>
<dbReference type="PDB" id="6WNW">
    <property type="method" value="EM"/>
    <property type="resolution" value="3.20 A"/>
    <property type="chains" value="i=2-142"/>
</dbReference>
<dbReference type="PDB" id="6X6T">
    <property type="method" value="EM"/>
    <property type="resolution" value="3.20 A"/>
    <property type="chains" value="Y=1-142"/>
</dbReference>
<dbReference type="PDB" id="6X7F">
    <property type="method" value="EM"/>
    <property type="resolution" value="3.50 A"/>
    <property type="chains" value="Y=1-142"/>
</dbReference>
<dbReference type="PDB" id="6X7K">
    <property type="method" value="EM"/>
    <property type="resolution" value="3.10 A"/>
    <property type="chains" value="Y=1-142"/>
</dbReference>
<dbReference type="PDB" id="6X9Q">
    <property type="method" value="EM"/>
    <property type="resolution" value="4.80 A"/>
    <property type="chains" value="Y=1-142"/>
</dbReference>
<dbReference type="PDB" id="6XDQ">
    <property type="method" value="EM"/>
    <property type="resolution" value="3.70 A"/>
    <property type="chains" value="Y=1-142"/>
</dbReference>
<dbReference type="PDB" id="6XDR">
    <property type="method" value="EM"/>
    <property type="resolution" value="4.70 A"/>
    <property type="chains" value="Y=1-142"/>
</dbReference>
<dbReference type="PDB" id="6XGF">
    <property type="method" value="EM"/>
    <property type="resolution" value="5.00 A"/>
    <property type="chains" value="Y=1-142"/>
</dbReference>
<dbReference type="PDB" id="6XII">
    <property type="method" value="EM"/>
    <property type="resolution" value="7.00 A"/>
    <property type="chains" value="Y=1-142"/>
</dbReference>
<dbReference type="PDB" id="6XIJ">
    <property type="method" value="EM"/>
    <property type="resolution" value="8.00 A"/>
    <property type="chains" value="Y=1-142"/>
</dbReference>
<dbReference type="PDB" id="6XZ7">
    <property type="method" value="EM"/>
    <property type="resolution" value="2.10 A"/>
    <property type="chains" value="I=8-141"/>
</dbReference>
<dbReference type="PDB" id="6XZA">
    <property type="method" value="EM"/>
    <property type="resolution" value="2.66 A"/>
    <property type="chains" value="I2=8-141"/>
</dbReference>
<dbReference type="PDB" id="6XZB">
    <property type="method" value="EM"/>
    <property type="resolution" value="2.54 A"/>
    <property type="chains" value="I2=8-141"/>
</dbReference>
<dbReference type="PDB" id="6YSR">
    <property type="method" value="EM"/>
    <property type="resolution" value="3.10 A"/>
    <property type="chains" value="I=1-142"/>
</dbReference>
<dbReference type="PDB" id="6YSS">
    <property type="method" value="EM"/>
    <property type="resolution" value="2.60 A"/>
    <property type="chains" value="I=1-142"/>
</dbReference>
<dbReference type="PDB" id="6YST">
    <property type="method" value="EM"/>
    <property type="resolution" value="3.20 A"/>
    <property type="chains" value="I=1-142"/>
</dbReference>
<dbReference type="PDB" id="6YSU">
    <property type="method" value="EM"/>
    <property type="resolution" value="3.70 A"/>
    <property type="chains" value="I=1-142"/>
</dbReference>
<dbReference type="PDB" id="6ZTJ">
    <property type="method" value="EM"/>
    <property type="resolution" value="3.40 A"/>
    <property type="chains" value="BJ=1-142"/>
</dbReference>
<dbReference type="PDB" id="7ABZ">
    <property type="method" value="EM"/>
    <property type="resolution" value="3.21 A"/>
    <property type="chains" value="I=1-142"/>
</dbReference>
<dbReference type="PDB" id="7BL2">
    <property type="method" value="EM"/>
    <property type="resolution" value="3.70 A"/>
    <property type="chains" value="I=1-142"/>
</dbReference>
<dbReference type="PDB" id="7BL3">
    <property type="method" value="EM"/>
    <property type="resolution" value="3.50 A"/>
    <property type="chains" value="I=1-142"/>
</dbReference>
<dbReference type="PDB" id="7BL5">
    <property type="method" value="EM"/>
    <property type="resolution" value="3.30 A"/>
    <property type="chains" value="I=1-142"/>
</dbReference>
<dbReference type="PDB" id="7BV8">
    <property type="method" value="EM"/>
    <property type="resolution" value="3.14 A"/>
    <property type="chains" value="J=1-142"/>
</dbReference>
<dbReference type="PDB" id="7D6Z">
    <property type="method" value="EM"/>
    <property type="resolution" value="3.40 A"/>
    <property type="chains" value="I=1-142"/>
</dbReference>
<dbReference type="PDB" id="7D80">
    <property type="method" value="EM"/>
    <property type="resolution" value="4.10 A"/>
    <property type="chains" value="h=1-142"/>
</dbReference>
<dbReference type="PDB" id="7JSZ">
    <property type="method" value="EM"/>
    <property type="resolution" value="3.70 A"/>
    <property type="chains" value="i=1-142"/>
</dbReference>
<dbReference type="PDB" id="7JT3">
    <property type="method" value="EM"/>
    <property type="resolution" value="3.70 A"/>
    <property type="chains" value="i=1-142"/>
</dbReference>
<dbReference type="PDB" id="7K50">
    <property type="method" value="EM"/>
    <property type="resolution" value="3.40 A"/>
    <property type="chains" value="i=2-142"/>
</dbReference>
<dbReference type="PDB" id="7K51">
    <property type="method" value="EM"/>
    <property type="resolution" value="3.50 A"/>
    <property type="chains" value="i=2-142"/>
</dbReference>
<dbReference type="PDB" id="7K52">
    <property type="method" value="EM"/>
    <property type="resolution" value="3.40 A"/>
    <property type="chains" value="i=2-142"/>
</dbReference>
<dbReference type="PDB" id="7K53">
    <property type="method" value="EM"/>
    <property type="resolution" value="3.20 A"/>
    <property type="chains" value="i=2-142"/>
</dbReference>
<dbReference type="PDB" id="7K54">
    <property type="method" value="EM"/>
    <property type="resolution" value="3.20 A"/>
    <property type="chains" value="i=2-142"/>
</dbReference>
<dbReference type="PDB" id="7K55">
    <property type="method" value="EM"/>
    <property type="resolution" value="3.30 A"/>
    <property type="chains" value="i=2-142"/>
</dbReference>
<dbReference type="PDB" id="7LV0">
    <property type="method" value="EM"/>
    <property type="resolution" value="3.20 A"/>
    <property type="chains" value="i=2-142"/>
</dbReference>
<dbReference type="PDB" id="7M5D">
    <property type="method" value="EM"/>
    <property type="resolution" value="2.80 A"/>
    <property type="chains" value="I=2-142"/>
</dbReference>
<dbReference type="PDB" id="7N1P">
    <property type="method" value="EM"/>
    <property type="resolution" value="2.33 A"/>
    <property type="chains" value="LK=1-142"/>
</dbReference>
<dbReference type="PDB" id="7N2C">
    <property type="method" value="EM"/>
    <property type="resolution" value="2.72 A"/>
    <property type="chains" value="LK=1-142"/>
</dbReference>
<dbReference type="PDB" id="7N2V">
    <property type="method" value="EM"/>
    <property type="resolution" value="2.54 A"/>
    <property type="chains" value="LK=1-142"/>
</dbReference>
<dbReference type="PDB" id="7NWT">
    <property type="method" value="EM"/>
    <property type="resolution" value="2.66 A"/>
    <property type="chains" value="I=1-142"/>
</dbReference>
<dbReference type="PDB" id="7OJ0">
    <property type="method" value="EM"/>
    <property type="resolution" value="3.50 A"/>
    <property type="chains" value="9=7-140"/>
</dbReference>
<dbReference type="PDB" id="7PJS">
    <property type="method" value="EM"/>
    <property type="resolution" value="2.35 A"/>
    <property type="chains" value="I=1-142"/>
</dbReference>
<dbReference type="PDB" id="7PJT">
    <property type="method" value="EM"/>
    <property type="resolution" value="6.00 A"/>
    <property type="chains" value="I=1-142"/>
</dbReference>
<dbReference type="PDB" id="7PJU">
    <property type="method" value="EM"/>
    <property type="resolution" value="9.50 A"/>
    <property type="chains" value="I=1-142"/>
</dbReference>
<dbReference type="PDB" id="7PJV">
    <property type="method" value="EM"/>
    <property type="resolution" value="3.10 A"/>
    <property type="chains" value="I=1-142"/>
</dbReference>
<dbReference type="PDB" id="7PJW">
    <property type="method" value="EM"/>
    <property type="resolution" value="4.00 A"/>
    <property type="chains" value="I=1-142"/>
</dbReference>
<dbReference type="PDB" id="7PJX">
    <property type="method" value="EM"/>
    <property type="resolution" value="6.50 A"/>
    <property type="chains" value="I=1-142"/>
</dbReference>
<dbReference type="PDB" id="7PJY">
    <property type="method" value="EM"/>
    <property type="resolution" value="3.10 A"/>
    <property type="chains" value="I=1-142"/>
</dbReference>
<dbReference type="PDB" id="7PJZ">
    <property type="method" value="EM"/>
    <property type="resolution" value="6.00 A"/>
    <property type="chains" value="I=1-142"/>
</dbReference>
<dbReference type="PDB" id="7QG8">
    <property type="method" value="EM"/>
    <property type="resolution" value="3.97 A"/>
    <property type="chains" value="V=1-142"/>
</dbReference>
<dbReference type="PDB" id="7QGH">
    <property type="method" value="EM"/>
    <property type="resolution" value="4.48 A"/>
    <property type="chains" value="V=1-142"/>
</dbReference>
<dbReference type="PDB" id="7QGN">
    <property type="method" value="EM"/>
    <property type="resolution" value="3.37 A"/>
    <property type="chains" value="V=1-142"/>
</dbReference>
<dbReference type="PDB" id="7QGR">
    <property type="method" value="EM"/>
    <property type="resolution" value="5.70 A"/>
    <property type="chains" value="V=1-142"/>
</dbReference>
<dbReference type="PDB" id="7SA4">
    <property type="method" value="EM"/>
    <property type="resolution" value="2.55 A"/>
    <property type="chains" value="I=1-142"/>
</dbReference>
<dbReference type="PDB" id="7SS9">
    <property type="method" value="EM"/>
    <property type="resolution" value="3.90 A"/>
    <property type="chains" value="i=1-142"/>
</dbReference>
<dbReference type="PDB" id="7SSD">
    <property type="method" value="EM"/>
    <property type="resolution" value="3.30 A"/>
    <property type="chains" value="i=1-142"/>
</dbReference>
<dbReference type="PDB" id="7SSL">
    <property type="method" value="EM"/>
    <property type="resolution" value="3.80 A"/>
    <property type="chains" value="i=2-142"/>
</dbReference>
<dbReference type="PDB" id="7SSN">
    <property type="method" value="EM"/>
    <property type="resolution" value="3.20 A"/>
    <property type="chains" value="i=2-142"/>
</dbReference>
<dbReference type="PDB" id="7SSO">
    <property type="method" value="EM"/>
    <property type="resolution" value="3.20 A"/>
    <property type="chains" value="i=2-142"/>
</dbReference>
<dbReference type="PDB" id="7SSW">
    <property type="method" value="EM"/>
    <property type="resolution" value="3.80 A"/>
    <property type="chains" value="i=1-142"/>
</dbReference>
<dbReference type="PDB" id="7ST2">
    <property type="method" value="EM"/>
    <property type="resolution" value="2.90 A"/>
    <property type="chains" value="i=1-142"/>
</dbReference>
<dbReference type="PDB" id="7ST6">
    <property type="method" value="EM"/>
    <property type="resolution" value="3.00 A"/>
    <property type="chains" value="i=1-142"/>
</dbReference>
<dbReference type="PDB" id="7ST7">
    <property type="method" value="EM"/>
    <property type="resolution" value="3.20 A"/>
    <property type="chains" value="i=2-142"/>
</dbReference>
<dbReference type="PDB" id="7TOS">
    <property type="method" value="EM"/>
    <property type="resolution" value="2.90 A"/>
    <property type="chains" value="L11=2-142"/>
</dbReference>
<dbReference type="PDB" id="7UG7">
    <property type="method" value="EM"/>
    <property type="resolution" value="2.58 A"/>
    <property type="chains" value="LK=1-142"/>
</dbReference>
<dbReference type="PDB" id="7YLA">
    <property type="method" value="EM"/>
    <property type="resolution" value="2.52 A"/>
    <property type="chains" value="Q=8-141"/>
</dbReference>
<dbReference type="PDB" id="8FIZ">
    <property type="method" value="EM"/>
    <property type="resolution" value="3.80 A"/>
    <property type="chains" value="BL=1-142"/>
</dbReference>
<dbReference type="PDB" id="8FZD">
    <property type="method" value="EM"/>
    <property type="resolution" value="3.10 A"/>
    <property type="chains" value="J=1-142"/>
</dbReference>
<dbReference type="PDB" id="8FZE">
    <property type="method" value="EM"/>
    <property type="resolution" value="3.00 A"/>
    <property type="chains" value="J=1-142"/>
</dbReference>
<dbReference type="PDB" id="8FZF">
    <property type="method" value="EM"/>
    <property type="resolution" value="3.20 A"/>
    <property type="chains" value="J=1-142"/>
</dbReference>
<dbReference type="PDB" id="8FZG">
    <property type="method" value="EM"/>
    <property type="resolution" value="3.10 A"/>
    <property type="chains" value="J=1-142"/>
</dbReference>
<dbReference type="PDB" id="8FZH">
    <property type="method" value="EM"/>
    <property type="resolution" value="2.90 A"/>
    <property type="chains" value="J=1-142"/>
</dbReference>
<dbReference type="PDB" id="8FZI">
    <property type="method" value="EM"/>
    <property type="resolution" value="3.10 A"/>
    <property type="chains" value="J=1-142"/>
</dbReference>
<dbReference type="PDB" id="8FZJ">
    <property type="method" value="EM"/>
    <property type="resolution" value="3.00 A"/>
    <property type="chains" value="J=1-142"/>
</dbReference>
<dbReference type="PDB" id="8G7P">
    <property type="method" value="EM"/>
    <property type="resolution" value="2.90 A"/>
    <property type="chains" value="J=1-142"/>
</dbReference>
<dbReference type="PDB" id="8G7Q">
    <property type="method" value="EM"/>
    <property type="resolution" value="3.10 A"/>
    <property type="chains" value="J=1-142"/>
</dbReference>
<dbReference type="PDB" id="8P16">
    <property type="method" value="EM"/>
    <property type="resolution" value="2.77 A"/>
    <property type="chains" value="I=1-142"/>
</dbReference>
<dbReference type="PDB" id="8P17">
    <property type="method" value="EM"/>
    <property type="resolution" value="2.78 A"/>
    <property type="chains" value="I=1-142"/>
</dbReference>
<dbReference type="PDB" id="8P18">
    <property type="method" value="EM"/>
    <property type="resolution" value="2.77 A"/>
    <property type="chains" value="I=1-142"/>
</dbReference>
<dbReference type="PDB" id="8PEG">
    <property type="method" value="EM"/>
    <property type="resolution" value="3.30 A"/>
    <property type="chains" value="k=1-142"/>
</dbReference>
<dbReference type="PDB" id="8PHJ">
    <property type="method" value="EM"/>
    <property type="resolution" value="3.67 A"/>
    <property type="chains" value="6=1-142"/>
</dbReference>
<dbReference type="PDB" id="8PKL">
    <property type="method" value="EM"/>
    <property type="resolution" value="3.09 A"/>
    <property type="chains" value="k=1-142"/>
</dbReference>
<dbReference type="PDB" id="8QK7">
    <property type="method" value="EM"/>
    <property type="resolution" value="2.77 A"/>
    <property type="chains" value="I=1-142"/>
</dbReference>
<dbReference type="PDB" id="8UPO">
    <property type="method" value="EM"/>
    <property type="resolution" value="5.50 A"/>
    <property type="chains" value="Y=1-142"/>
</dbReference>
<dbReference type="PDB" id="8UPR">
    <property type="method" value="EM"/>
    <property type="resolution" value="5.30 A"/>
    <property type="chains" value="Y=1-142"/>
</dbReference>
<dbReference type="PDB" id="8UQL">
    <property type="method" value="EM"/>
    <property type="resolution" value="3.20 A"/>
    <property type="chains" value="Y=1-142"/>
</dbReference>
<dbReference type="PDB" id="8UQM">
    <property type="method" value="EM"/>
    <property type="resolution" value="5.30 A"/>
    <property type="chains" value="Y=1-142"/>
</dbReference>
<dbReference type="PDB" id="8UQP">
    <property type="method" value="EM"/>
    <property type="resolution" value="3.80 A"/>
    <property type="chains" value="Y=1-142"/>
</dbReference>
<dbReference type="PDB" id="8UR0">
    <property type="method" value="EM"/>
    <property type="resolution" value="3.40 A"/>
    <property type="chains" value="Y=1-142"/>
</dbReference>
<dbReference type="PDB" id="8URH">
    <property type="method" value="EM"/>
    <property type="resolution" value="5.70 A"/>
    <property type="chains" value="Y=1-142"/>
</dbReference>
<dbReference type="PDB" id="8URI">
    <property type="method" value="EM"/>
    <property type="resolution" value="5.30 A"/>
    <property type="chains" value="Y=1-142"/>
</dbReference>
<dbReference type="PDB" id="8URX">
    <property type="method" value="EM"/>
    <property type="resolution" value="6.60 A"/>
    <property type="chains" value="Y=1-142"/>
</dbReference>
<dbReference type="PDB" id="8URY">
    <property type="method" value="EM"/>
    <property type="resolution" value="3.10 A"/>
    <property type="chains" value="Y=1-142"/>
</dbReference>
<dbReference type="PDB" id="8VS9">
    <property type="method" value="EM"/>
    <property type="resolution" value="3.90 A"/>
    <property type="chains" value="L11=1-142"/>
</dbReference>
<dbReference type="PDB" id="8VSA">
    <property type="method" value="EM"/>
    <property type="resolution" value="3.70 A"/>
    <property type="chains" value="L11=1-142"/>
</dbReference>
<dbReference type="PDB" id="8W51">
    <property type="method" value="EM"/>
    <property type="resolution" value="2.40 A"/>
    <property type="chains" value="J=1-142"/>
</dbReference>
<dbReference type="PDB" id="9GFT">
    <property type="method" value="EM"/>
    <property type="resolution" value="3.10 A"/>
    <property type="chains" value="Ad/V=1-142"/>
</dbReference>
<dbReference type="PDB" id="9GGR">
    <property type="method" value="EM"/>
    <property type="resolution" value="3.20 A"/>
    <property type="chains" value="Ad/V=1-142"/>
</dbReference>
<dbReference type="PDB" id="9MOR">
    <property type="method" value="EM"/>
    <property type="resolution" value="2.65 A"/>
    <property type="chains" value="I=1-142"/>
</dbReference>
<dbReference type="PDB" id="9MQ4">
    <property type="method" value="EM"/>
    <property type="resolution" value="2.78 A"/>
    <property type="chains" value="I=1-142"/>
</dbReference>
<dbReference type="PDBsum" id="1EG0"/>
<dbReference type="PDBsum" id="1MJ1"/>
<dbReference type="PDBsum" id="1ML5"/>
<dbReference type="PDBsum" id="2J28"/>
<dbReference type="PDBsum" id="2RDO"/>
<dbReference type="PDBsum" id="3DEG"/>
<dbReference type="PDBsum" id="3EP2"/>
<dbReference type="PDBsum" id="3EQ3"/>
<dbReference type="PDBsum" id="3EQ4"/>
<dbReference type="PDBsum" id="3J0D"/>
<dbReference type="PDBsum" id="3J5L"/>
<dbReference type="PDBsum" id="3J7Z"/>
<dbReference type="PDBsum" id="3J8G"/>
<dbReference type="PDBsum" id="3J9Y"/>
<dbReference type="PDBsum" id="3J9Z"/>
<dbReference type="PDBsum" id="3JA1"/>
<dbReference type="PDBsum" id="3JBV"/>
<dbReference type="PDBsum" id="3JCD"/>
<dbReference type="PDBsum" id="3JCE"/>
<dbReference type="PDBsum" id="3JCJ"/>
<dbReference type="PDBsum" id="3JCN"/>
<dbReference type="PDBsum" id="487D"/>
<dbReference type="PDBsum" id="4CSU"/>
<dbReference type="PDBsum" id="4U1U"/>
<dbReference type="PDBsum" id="4U1V"/>
<dbReference type="PDBsum" id="4U20"/>
<dbReference type="PDBsum" id="4U24"/>
<dbReference type="PDBsum" id="4U25"/>
<dbReference type="PDBsum" id="4U26"/>
<dbReference type="PDBsum" id="4U27"/>
<dbReference type="PDBsum" id="4UY8"/>
<dbReference type="PDBsum" id="4V47"/>
<dbReference type="PDBsum" id="4V48"/>
<dbReference type="PDBsum" id="4V4H"/>
<dbReference type="PDBsum" id="4V4Q"/>
<dbReference type="PDBsum" id="4V4V"/>
<dbReference type="PDBsum" id="4V4W"/>
<dbReference type="PDBsum" id="4V50"/>
<dbReference type="PDBsum" id="4V52"/>
<dbReference type="PDBsum" id="4V53"/>
<dbReference type="PDBsum" id="4V54"/>
<dbReference type="PDBsum" id="4V55"/>
<dbReference type="PDBsum" id="4V56"/>
<dbReference type="PDBsum" id="4V57"/>
<dbReference type="PDBsum" id="4V5B"/>
<dbReference type="PDBsum" id="4V5H"/>
<dbReference type="PDBsum" id="4V5Y"/>
<dbReference type="PDBsum" id="4V64"/>
<dbReference type="PDBsum" id="4V65"/>
<dbReference type="PDBsum" id="4V66"/>
<dbReference type="PDBsum" id="4V69"/>
<dbReference type="PDBsum" id="4V6C"/>
<dbReference type="PDBsum" id="4V6D"/>
<dbReference type="PDBsum" id="4V6E"/>
<dbReference type="PDBsum" id="4V6K"/>
<dbReference type="PDBsum" id="4V6L"/>
<dbReference type="PDBsum" id="4V6M"/>
<dbReference type="PDBsum" id="4V6N"/>
<dbReference type="PDBsum" id="4V6O"/>
<dbReference type="PDBsum" id="4V6P"/>
<dbReference type="PDBsum" id="4V6Q"/>
<dbReference type="PDBsum" id="4V6R"/>
<dbReference type="PDBsum" id="4V6S"/>
<dbReference type="PDBsum" id="4V6T"/>
<dbReference type="PDBsum" id="4V6V"/>
<dbReference type="PDBsum" id="4V6Y"/>
<dbReference type="PDBsum" id="4V6Z"/>
<dbReference type="PDBsum" id="4V70"/>
<dbReference type="PDBsum" id="4V71"/>
<dbReference type="PDBsum" id="4V72"/>
<dbReference type="PDBsum" id="4V73"/>
<dbReference type="PDBsum" id="4V74"/>
<dbReference type="PDBsum" id="4V75"/>
<dbReference type="PDBsum" id="4V76"/>
<dbReference type="PDBsum" id="4V77"/>
<dbReference type="PDBsum" id="4V78"/>
<dbReference type="PDBsum" id="4V79"/>
<dbReference type="PDBsum" id="4V7A"/>
<dbReference type="PDBsum" id="4V7B"/>
<dbReference type="PDBsum" id="4V7C"/>
<dbReference type="PDBsum" id="4V7D"/>
<dbReference type="PDBsum" id="4V7I"/>
<dbReference type="PDBsum" id="4V7S"/>
<dbReference type="PDBsum" id="4V7T"/>
<dbReference type="PDBsum" id="4V7U"/>
<dbReference type="PDBsum" id="4V7V"/>
<dbReference type="PDBsum" id="4V85"/>
<dbReference type="PDBsum" id="4V89"/>
<dbReference type="PDBsum" id="4V9C"/>
<dbReference type="PDBsum" id="4V9D"/>
<dbReference type="PDBsum" id="4V9O"/>
<dbReference type="PDBsum" id="4V9P"/>
<dbReference type="PDBsum" id="4WF1"/>
<dbReference type="PDBsum" id="4WOI"/>
<dbReference type="PDBsum" id="4WWW"/>
<dbReference type="PDBsum" id="4YBB"/>
<dbReference type="PDBsum" id="5ADY"/>
<dbReference type="PDBsum" id="5AFI"/>
<dbReference type="PDBsum" id="5AKA"/>
<dbReference type="PDBsum" id="5GAD"/>
<dbReference type="PDBsum" id="5GAE"/>
<dbReference type="PDBsum" id="5GAF"/>
<dbReference type="PDBsum" id="5GAG"/>
<dbReference type="PDBsum" id="5GAH"/>
<dbReference type="PDBsum" id="5H5U"/>
<dbReference type="PDBsum" id="5IQR"/>
<dbReference type="PDBsum" id="5IT8"/>
<dbReference type="PDBsum" id="5J5B"/>
<dbReference type="PDBsum" id="5J7L"/>
<dbReference type="PDBsum" id="5J88"/>
<dbReference type="PDBsum" id="5J8A"/>
<dbReference type="PDBsum" id="5J91"/>
<dbReference type="PDBsum" id="5JC9"/>
<dbReference type="PDBsum" id="5JTE"/>
<dbReference type="PDBsum" id="5JU8"/>
<dbReference type="PDBsum" id="5KCR"/>
<dbReference type="PDBsum" id="5KCS"/>
<dbReference type="PDBsum" id="5KPS"/>
<dbReference type="PDBsum" id="5KPV"/>
<dbReference type="PDBsum" id="5KPW"/>
<dbReference type="PDBsum" id="5KPX"/>
<dbReference type="PDBsum" id="5L3P"/>
<dbReference type="PDBsum" id="5LZA"/>
<dbReference type="PDBsum" id="5LZB"/>
<dbReference type="PDBsum" id="5LZC"/>
<dbReference type="PDBsum" id="5LZD"/>
<dbReference type="PDBsum" id="5LZE"/>
<dbReference type="PDBsum" id="5LZF"/>
<dbReference type="PDBsum" id="5MDV"/>
<dbReference type="PDBsum" id="5MDW"/>
<dbReference type="PDBsum" id="5MDY"/>
<dbReference type="PDBsum" id="5MDZ"/>
<dbReference type="PDBsum" id="5NCO"/>
<dbReference type="PDBsum" id="5NP6"/>
<dbReference type="PDBsum" id="5NWY"/>
<dbReference type="PDBsum" id="5O2R"/>
<dbReference type="PDBsum" id="5U4I"/>
<dbReference type="PDBsum" id="5U9F"/>
<dbReference type="PDBsum" id="5U9G"/>
<dbReference type="PDBsum" id="5UYK"/>
<dbReference type="PDBsum" id="5UYL"/>
<dbReference type="PDBsum" id="5UYM"/>
<dbReference type="PDBsum" id="5UYN"/>
<dbReference type="PDBsum" id="5UYP"/>
<dbReference type="PDBsum" id="5UYQ"/>
<dbReference type="PDBsum" id="5WDT"/>
<dbReference type="PDBsum" id="5WE4"/>
<dbReference type="PDBsum" id="5WE6"/>
<dbReference type="PDBsum" id="5WF0"/>
<dbReference type="PDBsum" id="5WFK"/>
<dbReference type="PDBsum" id="5WFS"/>
<dbReference type="PDBsum" id="6BU8"/>
<dbReference type="PDBsum" id="6BY1"/>
<dbReference type="PDBsum" id="6C4I"/>
<dbReference type="PDBsum" id="6DNC"/>
<dbReference type="PDBsum" id="6GWT"/>
<dbReference type="PDBsum" id="6GXM"/>
<dbReference type="PDBsum" id="6GXN"/>
<dbReference type="PDBsum" id="6GXO"/>
<dbReference type="PDBsum" id="6GXP"/>
<dbReference type="PDBsum" id="6HRM"/>
<dbReference type="PDBsum" id="6I0Y"/>
<dbReference type="PDBsum" id="6I7V"/>
<dbReference type="PDBsum" id="6O9J"/>
<dbReference type="PDBsum" id="6O9K"/>
<dbReference type="PDBsum" id="6PJ6"/>
<dbReference type="PDBsum" id="6Q97"/>
<dbReference type="PDBsum" id="6Q98"/>
<dbReference type="PDBsum" id="6Q9A"/>
<dbReference type="PDBsum" id="6S0K"/>
<dbReference type="PDBsum" id="6U48"/>
<dbReference type="PDBsum" id="6VU3"/>
<dbReference type="PDBsum" id="6VYQ"/>
<dbReference type="PDBsum" id="6VYR"/>
<dbReference type="PDBsum" id="6VYS"/>
<dbReference type="PDBsum" id="6VZJ"/>
<dbReference type="PDBsum" id="6WD0"/>
<dbReference type="PDBsum" id="6WD1"/>
<dbReference type="PDBsum" id="6WD2"/>
<dbReference type="PDBsum" id="6WD3"/>
<dbReference type="PDBsum" id="6WD4"/>
<dbReference type="PDBsum" id="6WD5"/>
<dbReference type="PDBsum" id="6WD6"/>
<dbReference type="PDBsum" id="6WD7"/>
<dbReference type="PDBsum" id="6WD8"/>
<dbReference type="PDBsum" id="6WD9"/>
<dbReference type="PDBsum" id="6WDA"/>
<dbReference type="PDBsum" id="6WDB"/>
<dbReference type="PDBsum" id="6WDC"/>
<dbReference type="PDBsum" id="6WDD"/>
<dbReference type="PDBsum" id="6WDE"/>
<dbReference type="PDBsum" id="6WDF"/>
<dbReference type="PDBsum" id="6WDG"/>
<dbReference type="PDBsum" id="6WDH"/>
<dbReference type="PDBsum" id="6WDI"/>
<dbReference type="PDBsum" id="6WDJ"/>
<dbReference type="PDBsum" id="6WDK"/>
<dbReference type="PDBsum" id="6WDL"/>
<dbReference type="PDBsum" id="6WDM"/>
<dbReference type="PDBsum" id="6WNT"/>
<dbReference type="PDBsum" id="6WNV"/>
<dbReference type="PDBsum" id="6WNW"/>
<dbReference type="PDBsum" id="6X6T"/>
<dbReference type="PDBsum" id="6X7F"/>
<dbReference type="PDBsum" id="6X7K"/>
<dbReference type="PDBsum" id="6X9Q"/>
<dbReference type="PDBsum" id="6XDQ"/>
<dbReference type="PDBsum" id="6XDR"/>
<dbReference type="PDBsum" id="6XGF"/>
<dbReference type="PDBsum" id="6XII"/>
<dbReference type="PDBsum" id="6XIJ"/>
<dbReference type="PDBsum" id="6XZ7"/>
<dbReference type="PDBsum" id="6XZA"/>
<dbReference type="PDBsum" id="6XZB"/>
<dbReference type="PDBsum" id="6YSR"/>
<dbReference type="PDBsum" id="6YSS"/>
<dbReference type="PDBsum" id="6YST"/>
<dbReference type="PDBsum" id="6YSU"/>
<dbReference type="PDBsum" id="6ZTJ"/>
<dbReference type="PDBsum" id="7ABZ"/>
<dbReference type="PDBsum" id="7BL2"/>
<dbReference type="PDBsum" id="7BL3"/>
<dbReference type="PDBsum" id="7BL5"/>
<dbReference type="PDBsum" id="7BV8"/>
<dbReference type="PDBsum" id="7D6Z"/>
<dbReference type="PDBsum" id="7D80"/>
<dbReference type="PDBsum" id="7JSZ"/>
<dbReference type="PDBsum" id="7JT3"/>
<dbReference type="PDBsum" id="7K50"/>
<dbReference type="PDBsum" id="7K51"/>
<dbReference type="PDBsum" id="7K52"/>
<dbReference type="PDBsum" id="7K53"/>
<dbReference type="PDBsum" id="7K54"/>
<dbReference type="PDBsum" id="7K55"/>
<dbReference type="PDBsum" id="7LV0"/>
<dbReference type="PDBsum" id="7M5D"/>
<dbReference type="PDBsum" id="7N1P"/>
<dbReference type="PDBsum" id="7N2C"/>
<dbReference type="PDBsum" id="7N2V"/>
<dbReference type="PDBsum" id="7NWT"/>
<dbReference type="PDBsum" id="7OJ0"/>
<dbReference type="PDBsum" id="7PJS"/>
<dbReference type="PDBsum" id="7PJT"/>
<dbReference type="PDBsum" id="7PJU"/>
<dbReference type="PDBsum" id="7PJV"/>
<dbReference type="PDBsum" id="7PJW"/>
<dbReference type="PDBsum" id="7PJX"/>
<dbReference type="PDBsum" id="7PJY"/>
<dbReference type="PDBsum" id="7PJZ"/>
<dbReference type="PDBsum" id="7QG8"/>
<dbReference type="PDBsum" id="7QGH"/>
<dbReference type="PDBsum" id="7QGN"/>
<dbReference type="PDBsum" id="7QGR"/>
<dbReference type="PDBsum" id="7SA4"/>
<dbReference type="PDBsum" id="7SS9"/>
<dbReference type="PDBsum" id="7SSD"/>
<dbReference type="PDBsum" id="7SSL"/>
<dbReference type="PDBsum" id="7SSN"/>
<dbReference type="PDBsum" id="7SSO"/>
<dbReference type="PDBsum" id="7SSW"/>
<dbReference type="PDBsum" id="7ST2"/>
<dbReference type="PDBsum" id="7ST6"/>
<dbReference type="PDBsum" id="7ST7"/>
<dbReference type="PDBsum" id="7TOS"/>
<dbReference type="PDBsum" id="7UG7"/>
<dbReference type="PDBsum" id="7YLA"/>
<dbReference type="PDBsum" id="8FIZ"/>
<dbReference type="PDBsum" id="8FZD"/>
<dbReference type="PDBsum" id="8FZE"/>
<dbReference type="PDBsum" id="8FZF"/>
<dbReference type="PDBsum" id="8FZG"/>
<dbReference type="PDBsum" id="8FZH"/>
<dbReference type="PDBsum" id="8FZI"/>
<dbReference type="PDBsum" id="8FZJ"/>
<dbReference type="PDBsum" id="8G7P"/>
<dbReference type="PDBsum" id="8G7Q"/>
<dbReference type="PDBsum" id="8P16"/>
<dbReference type="PDBsum" id="8P17"/>
<dbReference type="PDBsum" id="8P18"/>
<dbReference type="PDBsum" id="8PEG"/>
<dbReference type="PDBsum" id="8PHJ"/>
<dbReference type="PDBsum" id="8PKL"/>
<dbReference type="PDBsum" id="8QK7"/>
<dbReference type="PDBsum" id="8UPO"/>
<dbReference type="PDBsum" id="8UPR"/>
<dbReference type="PDBsum" id="8UQL"/>
<dbReference type="PDBsum" id="8UQM"/>
<dbReference type="PDBsum" id="8UQP"/>
<dbReference type="PDBsum" id="8UR0"/>
<dbReference type="PDBsum" id="8URH"/>
<dbReference type="PDBsum" id="8URI"/>
<dbReference type="PDBsum" id="8URX"/>
<dbReference type="PDBsum" id="8URY"/>
<dbReference type="PDBsum" id="8VS9"/>
<dbReference type="PDBsum" id="8VSA"/>
<dbReference type="PDBsum" id="8W51"/>
<dbReference type="PDBsum" id="9GFT"/>
<dbReference type="PDBsum" id="9GGR"/>
<dbReference type="PDBsum" id="9MOR"/>
<dbReference type="PDBsum" id="9MQ4"/>
<dbReference type="EMDB" id="EMD-0076"/>
<dbReference type="EMDB" id="EMD-0080"/>
<dbReference type="EMDB" id="EMD-0081"/>
<dbReference type="EMDB" id="EMD-0082"/>
<dbReference type="EMDB" id="EMD-0083"/>
<dbReference type="EMDB" id="EMD-0261"/>
<dbReference type="EMDB" id="EMD-0322"/>
<dbReference type="EMDB" id="EMD-10073"/>
<dbReference type="EMDB" id="EMD-10655"/>
<dbReference type="EMDB" id="EMD-10656"/>
<dbReference type="EMDB" id="EMD-10657"/>
<dbReference type="EMDB" id="EMD-10905"/>
<dbReference type="EMDB" id="EMD-10906"/>
<dbReference type="EMDB" id="EMD-10907"/>
<dbReference type="EMDB" id="EMD-10908"/>
<dbReference type="EMDB" id="EMD-11418"/>
<dbReference type="EMDB" id="EMD-11710"/>
<dbReference type="EMDB" id="EMD-12215"/>
<dbReference type="EMDB" id="EMD-12216"/>
<dbReference type="EMDB" id="EMD-12218"/>
<dbReference type="EMDB" id="EMD-12635"/>
<dbReference type="EMDB" id="EMD-13458"/>
<dbReference type="EMDB" id="EMD-13459"/>
<dbReference type="EMDB" id="EMD-13461"/>
<dbReference type="EMDB" id="EMD-13462"/>
<dbReference type="EMDB" id="EMD-13463"/>
<dbReference type="EMDB" id="EMD-13464"/>
<dbReference type="EMDB" id="EMD-13465"/>
<dbReference type="EMDB" id="EMD-13952"/>
<dbReference type="EMDB" id="EMD-13955"/>
<dbReference type="EMDB" id="EMD-13956"/>
<dbReference type="EMDB" id="EMD-13958"/>
<dbReference type="EMDB" id="EMD-17346"/>
<dbReference type="EMDB" id="EMD-17347"/>
<dbReference type="EMDB" id="EMD-17348"/>
<dbReference type="EMDB" id="EMD-17631"/>
<dbReference type="EMDB" id="EMD-17667"/>
<dbReference type="EMDB" id="EMD-17743"/>
<dbReference type="EMDB" id="EMD-18458"/>
<dbReference type="EMDB" id="EMD-21620"/>
<dbReference type="EMDB" id="EMD-21625"/>
<dbReference type="EMDB" id="EMD-21630"/>
<dbReference type="EMDB" id="EMD-21631"/>
<dbReference type="EMDB" id="EMD-21632"/>
<dbReference type="EMDB" id="EMD-21633"/>
<dbReference type="EMDB" id="EMD-21634"/>
<dbReference type="EMDB" id="EMD-21635"/>
<dbReference type="EMDB" id="EMD-21636"/>
<dbReference type="EMDB" id="EMD-21637"/>
<dbReference type="EMDB" id="EMD-21638"/>
<dbReference type="EMDB" id="EMD-21639"/>
<dbReference type="EMDB" id="EMD-21640"/>
<dbReference type="EMDB" id="EMD-21641"/>
<dbReference type="EMDB" id="EMD-21856"/>
<dbReference type="EMDB" id="EMD-21857"/>
<dbReference type="EMDB" id="EMD-21858"/>
<dbReference type="EMDB" id="EMD-22464"/>
<dbReference type="EMDB" id="EMD-22472"/>
<dbReference type="EMDB" id="EMD-22669"/>
<dbReference type="EMDB" id="EMD-22670"/>
<dbReference type="EMDB" id="EMD-22671"/>
<dbReference type="EMDB" id="EMD-22672"/>
<dbReference type="EMDB" id="EMD-22673"/>
<dbReference type="EMDB" id="EMD-22674"/>
<dbReference type="EMDB" id="EMD-23528"/>
<dbReference type="EMDB" id="EMD-24120"/>
<dbReference type="EMDB" id="EMD-24132"/>
<dbReference type="EMDB" id="EMD-24134"/>
<dbReference type="EMDB" id="EMD-25405"/>
<dbReference type="EMDB" id="EMD-25407"/>
<dbReference type="EMDB" id="EMD-25409"/>
<dbReference type="EMDB" id="EMD-25410"/>
<dbReference type="EMDB" id="EMD-25411"/>
<dbReference type="EMDB" id="EMD-25415"/>
<dbReference type="EMDB" id="EMD-25418"/>
<dbReference type="EMDB" id="EMD-25420"/>
<dbReference type="EMDB" id="EMD-25421"/>
<dbReference type="EMDB" id="EMD-26486"/>
<dbReference type="EMDB" id="EMD-29214"/>
<dbReference type="EMDB" id="EMD-29620"/>
<dbReference type="EMDB" id="EMD-29621"/>
<dbReference type="EMDB" id="EMD-29624"/>
<dbReference type="EMDB" id="EMD-29627"/>
<dbReference type="EMDB" id="EMD-29628"/>
<dbReference type="EMDB" id="EMD-29631"/>
<dbReference type="EMDB" id="EMD-29634"/>
<dbReference type="EMDB" id="EMD-29819"/>
<dbReference type="EMDB" id="EMD-29820"/>
<dbReference type="EMDB" id="EMD-30215"/>
<dbReference type="EMDB" id="EMD-30598"/>
<dbReference type="EMDB" id="EMD-30611"/>
<dbReference type="EMDB" id="EMD-33904"/>
<dbReference type="EMDB" id="EMD-3489"/>
<dbReference type="EMDB" id="EMD-3490"/>
<dbReference type="EMDB" id="EMD-3492"/>
<dbReference type="EMDB" id="EMD-3493"/>
<dbReference type="EMDB" id="EMD-3617"/>
<dbReference type="EMDB" id="EMD-3713"/>
<dbReference type="EMDB" id="EMD-3730"/>
<dbReference type="EMDB" id="EMD-4001"/>
<dbReference type="EMDB" id="EMD-4121"/>
<dbReference type="EMDB" id="EMD-4122"/>
<dbReference type="EMDB" id="EMD-4123"/>
<dbReference type="EMDB" id="EMD-4124"/>
<dbReference type="EMDB" id="EMD-4125"/>
<dbReference type="EMDB" id="EMD-4126"/>
<dbReference type="EMDB" id="EMD-42453"/>
<dbReference type="EMDB" id="EMD-42454"/>
<dbReference type="EMDB" id="EMD-42473"/>
<dbReference type="EMDB" id="EMD-42474"/>
<dbReference type="EMDB" id="EMD-42477"/>
<dbReference type="EMDB" id="EMD-42479"/>
<dbReference type="EMDB" id="EMD-42492"/>
<dbReference type="EMDB" id="EMD-42493"/>
<dbReference type="EMDB" id="EMD-42503"/>
<dbReference type="EMDB" id="EMD-42504"/>
<dbReference type="EMDB" id="EMD-43490"/>
<dbReference type="EMDB" id="EMD-43491"/>
<dbReference type="EMDB" id="EMD-4476"/>
<dbReference type="EMDB" id="EMD-4477"/>
<dbReference type="EMDB" id="EMD-4478"/>
<dbReference type="EMDB" id="EMD-48479"/>
<dbReference type="EMDB" id="EMD-48513"/>
<dbReference type="EMDB" id="EMD-51318"/>
<dbReference type="EMDB" id="EMD-51340"/>
<dbReference type="EMDB" id="EMD-6667"/>
<dbReference type="EMDB" id="EMD-7289"/>
<dbReference type="EMDB" id="EMD-7341"/>
<dbReference type="EMDB" id="EMD-8000"/>
<dbReference type="EMDB" id="EMD-8001"/>
<dbReference type="EMDB" id="EMD-8002"/>
<dbReference type="EMDB" id="EMD-8003"/>
<dbReference type="EMDB" id="EMD-8004"/>
<dbReference type="EMDB" id="EMD-8107"/>
<dbReference type="EMDB" id="EMD-8175"/>
<dbReference type="EMDB" id="EMD-8176"/>
<dbReference type="EMDB" id="EMD-8237"/>
<dbReference type="EMDB" id="EMD-8238"/>
<dbReference type="EMDB" id="EMD-8279"/>
<dbReference type="EMDB" id="EMD-8280"/>
<dbReference type="EMDB" id="EMD-8281"/>
<dbReference type="EMDB" id="EMD-8282"/>
<dbReference type="EMDB" id="EMD-8505"/>
<dbReference type="EMDB" id="EMD-8615"/>
<dbReference type="EMDB" id="EMD-8616"/>
<dbReference type="EMDB" id="EMD-8617"/>
<dbReference type="EMDB" id="EMD-8618"/>
<dbReference type="EMDB" id="EMD-8619"/>
<dbReference type="EMDB" id="EMD-8620"/>
<dbReference type="EMDB" id="EMD-8813"/>
<dbReference type="EMDB" id="EMD-8814"/>
<dbReference type="EMDB" id="EMD-8815"/>
<dbReference type="EMDB" id="EMD-8828"/>
<dbReference type="SMR" id="P0A7J7"/>
<dbReference type="BioGRID" id="4259517">
    <property type="interactions" value="17"/>
</dbReference>
<dbReference type="BioGRID" id="852778">
    <property type="interactions" value="4"/>
</dbReference>
<dbReference type="ComplexPortal" id="CPX-3807">
    <property type="entry name" value="50S large ribosomal subunit"/>
</dbReference>
<dbReference type="DIP" id="DIP-35882N"/>
<dbReference type="FunCoup" id="P0A7J7">
    <property type="interactions" value="1067"/>
</dbReference>
<dbReference type="IntAct" id="P0A7J7">
    <property type="interactions" value="103"/>
</dbReference>
<dbReference type="STRING" id="511145.b3983"/>
<dbReference type="iPTMnet" id="P0A7J7"/>
<dbReference type="jPOST" id="P0A7J7"/>
<dbReference type="PaxDb" id="511145-b3983"/>
<dbReference type="EnsemblBacteria" id="AAC76957">
    <property type="protein sequence ID" value="AAC76957"/>
    <property type="gene ID" value="b3983"/>
</dbReference>
<dbReference type="GeneID" id="93777911"/>
<dbReference type="GeneID" id="948484"/>
<dbReference type="KEGG" id="ecj:JW3946"/>
<dbReference type="KEGG" id="eco:b3983"/>
<dbReference type="KEGG" id="ecoc:C3026_21515"/>
<dbReference type="PATRIC" id="fig|1411691.4.peg.2729"/>
<dbReference type="EchoBASE" id="EB0865"/>
<dbReference type="eggNOG" id="COG0080">
    <property type="taxonomic scope" value="Bacteria"/>
</dbReference>
<dbReference type="HOGENOM" id="CLU_074237_2_0_6"/>
<dbReference type="InParanoid" id="P0A7J7"/>
<dbReference type="OMA" id="CKQFNAK"/>
<dbReference type="OrthoDB" id="9802408at2"/>
<dbReference type="PhylomeDB" id="P0A7J7"/>
<dbReference type="BioCyc" id="EcoCyc:EG10872-MONOMER"/>
<dbReference type="BioCyc" id="MetaCyc:EG10872-MONOMER"/>
<dbReference type="EvolutionaryTrace" id="P0A7J7"/>
<dbReference type="PRO" id="PR:P0A7J7"/>
<dbReference type="Proteomes" id="UP000000625">
    <property type="component" value="Chromosome"/>
</dbReference>
<dbReference type="GO" id="GO:0005737">
    <property type="term" value="C:cytoplasm"/>
    <property type="evidence" value="ECO:0000314"/>
    <property type="project" value="ComplexPortal"/>
</dbReference>
<dbReference type="GO" id="GO:0005829">
    <property type="term" value="C:cytosol"/>
    <property type="evidence" value="ECO:0000314"/>
    <property type="project" value="EcoCyc"/>
</dbReference>
<dbReference type="GO" id="GO:0022625">
    <property type="term" value="C:cytosolic large ribosomal subunit"/>
    <property type="evidence" value="ECO:0000314"/>
    <property type="project" value="CAFA"/>
</dbReference>
<dbReference type="GO" id="GO:0070180">
    <property type="term" value="F:large ribosomal subunit rRNA binding"/>
    <property type="evidence" value="ECO:0000318"/>
    <property type="project" value="GO_Central"/>
</dbReference>
<dbReference type="GO" id="GO:0019843">
    <property type="term" value="F:rRNA binding"/>
    <property type="evidence" value="ECO:0000314"/>
    <property type="project" value="EcoCyc"/>
</dbReference>
<dbReference type="GO" id="GO:0003735">
    <property type="term" value="F:structural constituent of ribosome"/>
    <property type="evidence" value="ECO:0000314"/>
    <property type="project" value="CAFA"/>
</dbReference>
<dbReference type="GO" id="GO:0002181">
    <property type="term" value="P:cytoplasmic translation"/>
    <property type="evidence" value="ECO:0000303"/>
    <property type="project" value="ComplexPortal"/>
</dbReference>
<dbReference type="GO" id="GO:0000027">
    <property type="term" value="P:ribosomal large subunit assembly"/>
    <property type="evidence" value="ECO:0000314"/>
    <property type="project" value="CAFA"/>
</dbReference>
<dbReference type="GO" id="GO:0015968">
    <property type="term" value="P:stringent response"/>
    <property type="evidence" value="ECO:0000314"/>
    <property type="project" value="EcoCyc"/>
</dbReference>
<dbReference type="GO" id="GO:0006412">
    <property type="term" value="P:translation"/>
    <property type="evidence" value="ECO:0000315"/>
    <property type="project" value="EcoCyc"/>
</dbReference>
<dbReference type="GO" id="GO:0006415">
    <property type="term" value="P:translational termination"/>
    <property type="evidence" value="ECO:0000315"/>
    <property type="project" value="EcoCyc"/>
</dbReference>
<dbReference type="CDD" id="cd00349">
    <property type="entry name" value="Ribosomal_L11"/>
    <property type="match status" value="1"/>
</dbReference>
<dbReference type="FunFam" id="1.10.10.250:FF:000001">
    <property type="entry name" value="50S ribosomal protein L11"/>
    <property type="match status" value="1"/>
</dbReference>
<dbReference type="FunFam" id="3.30.1550.10:FF:000001">
    <property type="entry name" value="50S ribosomal protein L11"/>
    <property type="match status" value="1"/>
</dbReference>
<dbReference type="Gene3D" id="1.10.10.250">
    <property type="entry name" value="Ribosomal protein L11, C-terminal domain"/>
    <property type="match status" value="1"/>
</dbReference>
<dbReference type="Gene3D" id="3.30.1550.10">
    <property type="entry name" value="Ribosomal protein L11/L12, N-terminal domain"/>
    <property type="match status" value="1"/>
</dbReference>
<dbReference type="HAMAP" id="MF_00736">
    <property type="entry name" value="Ribosomal_uL11"/>
    <property type="match status" value="1"/>
</dbReference>
<dbReference type="InterPro" id="IPR000911">
    <property type="entry name" value="Ribosomal_uL11"/>
</dbReference>
<dbReference type="InterPro" id="IPR006519">
    <property type="entry name" value="Ribosomal_uL11_bac-typ"/>
</dbReference>
<dbReference type="InterPro" id="IPR020783">
    <property type="entry name" value="Ribosomal_uL11_C"/>
</dbReference>
<dbReference type="InterPro" id="IPR036769">
    <property type="entry name" value="Ribosomal_uL11_C_sf"/>
</dbReference>
<dbReference type="InterPro" id="IPR020785">
    <property type="entry name" value="Ribosomal_uL11_CS"/>
</dbReference>
<dbReference type="InterPro" id="IPR020784">
    <property type="entry name" value="Ribosomal_uL11_N"/>
</dbReference>
<dbReference type="InterPro" id="IPR036796">
    <property type="entry name" value="Ribosomal_uL11_N_sf"/>
</dbReference>
<dbReference type="NCBIfam" id="TIGR01632">
    <property type="entry name" value="L11_bact"/>
    <property type="match status" value="1"/>
</dbReference>
<dbReference type="PANTHER" id="PTHR11661">
    <property type="entry name" value="60S RIBOSOMAL PROTEIN L12"/>
    <property type="match status" value="1"/>
</dbReference>
<dbReference type="PANTHER" id="PTHR11661:SF1">
    <property type="entry name" value="LARGE RIBOSOMAL SUBUNIT PROTEIN UL11M"/>
    <property type="match status" value="1"/>
</dbReference>
<dbReference type="Pfam" id="PF00298">
    <property type="entry name" value="Ribosomal_L11"/>
    <property type="match status" value="1"/>
</dbReference>
<dbReference type="Pfam" id="PF03946">
    <property type="entry name" value="Ribosomal_L11_N"/>
    <property type="match status" value="1"/>
</dbReference>
<dbReference type="SMART" id="SM00649">
    <property type="entry name" value="RL11"/>
    <property type="match status" value="1"/>
</dbReference>
<dbReference type="SUPFAM" id="SSF54747">
    <property type="entry name" value="Ribosomal L11/L12e N-terminal domain"/>
    <property type="match status" value="1"/>
</dbReference>
<dbReference type="SUPFAM" id="SSF46906">
    <property type="entry name" value="Ribosomal protein L11, C-terminal domain"/>
    <property type="match status" value="1"/>
</dbReference>
<dbReference type="PROSITE" id="PS00359">
    <property type="entry name" value="RIBOSOMAL_L11"/>
    <property type="match status" value="1"/>
</dbReference>
<organism>
    <name type="scientific">Escherichia coli (strain K12)</name>
    <dbReference type="NCBI Taxonomy" id="83333"/>
    <lineage>
        <taxon>Bacteria</taxon>
        <taxon>Pseudomonadati</taxon>
        <taxon>Pseudomonadota</taxon>
        <taxon>Gammaproteobacteria</taxon>
        <taxon>Enterobacterales</taxon>
        <taxon>Enterobacteriaceae</taxon>
        <taxon>Escherichia</taxon>
    </lineage>
</organism>
<reference key="1">
    <citation type="journal article" date="1979" name="Proc. Natl. Acad. Sci. U.S.A.">
        <title>Nucleotide sequence of the ribosomal protein gene cluster adjacent to the gene for RNA polymerase subunit beta in Escherichia coli.</title>
        <authorList>
            <person name="Post L.E."/>
            <person name="Strycharz G.D."/>
            <person name="Nomura M."/>
            <person name="Lewis H."/>
            <person name="Dennis P.P."/>
        </authorList>
    </citation>
    <scope>NUCLEOTIDE SEQUENCE [GENOMIC DNA]</scope>
</reference>
<reference key="2">
    <citation type="journal article" date="1993" name="Nucleic Acids Res.">
        <title>Analysis of the Escherichia coli genome. IV. DNA sequence of the region from 89.2 to 92.8 minutes.</title>
        <authorList>
            <person name="Blattner F.R."/>
            <person name="Burland V.D."/>
            <person name="Plunkett G. III"/>
            <person name="Sofia H.J."/>
            <person name="Daniels D.L."/>
        </authorList>
    </citation>
    <scope>NUCLEOTIDE SEQUENCE [LARGE SCALE GENOMIC DNA]</scope>
    <source>
        <strain>K12 / MG1655 / ATCC 47076</strain>
    </source>
</reference>
<reference key="3">
    <citation type="journal article" date="1997" name="Science">
        <title>The complete genome sequence of Escherichia coli K-12.</title>
        <authorList>
            <person name="Blattner F.R."/>
            <person name="Plunkett G. III"/>
            <person name="Bloch C.A."/>
            <person name="Perna N.T."/>
            <person name="Burland V."/>
            <person name="Riley M."/>
            <person name="Collado-Vides J."/>
            <person name="Glasner J.D."/>
            <person name="Rode C.K."/>
            <person name="Mayhew G.F."/>
            <person name="Gregor J."/>
            <person name="Davis N.W."/>
            <person name="Kirkpatrick H.A."/>
            <person name="Goeden M.A."/>
            <person name="Rose D.J."/>
            <person name="Mau B."/>
            <person name="Shao Y."/>
        </authorList>
    </citation>
    <scope>NUCLEOTIDE SEQUENCE [LARGE SCALE GENOMIC DNA]</scope>
    <source>
        <strain>K12 / MG1655 / ATCC 47076</strain>
    </source>
</reference>
<reference key="4">
    <citation type="journal article" date="2006" name="Mol. Syst. Biol.">
        <title>Highly accurate genome sequences of Escherichia coli K-12 strains MG1655 and W3110.</title>
        <authorList>
            <person name="Hayashi K."/>
            <person name="Morooka N."/>
            <person name="Yamamoto Y."/>
            <person name="Fujita K."/>
            <person name="Isono K."/>
            <person name="Choi S."/>
            <person name="Ohtsubo E."/>
            <person name="Baba T."/>
            <person name="Wanner B.L."/>
            <person name="Mori H."/>
            <person name="Horiuchi T."/>
        </authorList>
    </citation>
    <scope>NUCLEOTIDE SEQUENCE [LARGE SCALE GENOMIC DNA]</scope>
    <source>
        <strain>K12 / W3110 / ATCC 27325 / DSM 5911</strain>
    </source>
</reference>
<reference key="5">
    <citation type="journal article" date="1980" name="Eur. J. Biochem.">
        <title>Purification and primary structure determination of the N-terminal blocked protein, L11, from Escherichia coli ribosomes.</title>
        <authorList>
            <person name="Dognin M.J."/>
            <person name="Wittmann-Liebold B."/>
        </authorList>
    </citation>
    <scope>PROTEIN SEQUENCE OF 2-142</scope>
    <scope>SUBUNIT</scope>
    <scope>METHYLATION AT ALA-2; LYS-4 AND LYS-40</scope>
    <source>
        <strain>K12</strain>
    </source>
</reference>
<reference key="6">
    <citation type="journal article" date="1990" name="J. Bacteriol.">
        <title>Sequence and transcriptional pattern of the essential Escherichia coli secE-nusG operon.</title>
        <authorList>
            <person name="Downing W.L."/>
            <person name="Sullivan S.L."/>
            <person name="Gottesman M.E."/>
            <person name="Dennis P.P."/>
        </authorList>
    </citation>
    <scope>NUCLEOTIDE SEQUENCE [GENOMIC DNA] OF 1-17</scope>
</reference>
<reference key="7">
    <citation type="journal article" date="1989" name="Biochem. Int.">
        <title>Structural properties of ribosomal protein L11 from Escherichia coli.</title>
        <authorList>
            <person name="Choli T."/>
        </authorList>
    </citation>
    <scope>STRUCTURAL STUDIES</scope>
</reference>
<reference key="8">
    <citation type="journal article" date="1997" name="Electrophoresis">
        <title>Escherichia coli proteome analysis using the gene-protein database.</title>
        <authorList>
            <person name="VanBogelen R.A."/>
            <person name="Abshire K.Z."/>
            <person name="Moldover B."/>
            <person name="Olson E.R."/>
            <person name="Neidhardt F.C."/>
        </authorList>
    </citation>
    <scope>IDENTIFICATION BY 2D-GEL</scope>
</reference>
<reference key="9">
    <citation type="journal article" date="1999" name="Anal. Biochem.">
        <title>Observation of Escherichia coli ribosomal proteins and their posttranslational modifications by mass spectrometry.</title>
        <authorList>
            <person name="Arnold R.J."/>
            <person name="Reilly J.P."/>
        </authorList>
    </citation>
    <scope>MASS SPECTROMETRY</scope>
    <scope>SUBUNIT</scope>
    <source>
        <strain>K12 / ATCC 25404 / DSM 5698 / NCIMB 11290</strain>
    </source>
</reference>
<reference key="10">
    <citation type="journal article" date="2014" name="Curr. Opin. Struct. Biol.">
        <title>A new system for naming ribosomal proteins.</title>
        <authorList>
            <person name="Ban N."/>
            <person name="Beckmann R."/>
            <person name="Cate J.H.D."/>
            <person name="Dinman J.D."/>
            <person name="Dragon F."/>
            <person name="Ellis S.R."/>
            <person name="Lafontaine D.L.J."/>
            <person name="Lindahl L."/>
            <person name="Liljas A."/>
            <person name="Lipton J.M."/>
            <person name="McAlear M.A."/>
            <person name="Moore P.B."/>
            <person name="Noller H.F."/>
            <person name="Ortega J."/>
            <person name="Panse V.G."/>
            <person name="Ramakrishnan V."/>
            <person name="Spahn C.M.T."/>
            <person name="Steitz T.A."/>
            <person name="Tchorzewski M."/>
            <person name="Tollervey D."/>
            <person name="Warren A.J."/>
            <person name="Williamson J.R."/>
            <person name="Wilson D."/>
            <person name="Yonath A."/>
            <person name="Yusupov M."/>
        </authorList>
    </citation>
    <scope>NOMENCLATURE</scope>
</reference>
<reference key="11">
    <citation type="journal article" date="2000" name="J. Mol. Biol.">
        <title>The 3D arrangement of the 23 S and 5 S rRNA in the Escherichia coli 50 S ribosomal subunit based on a cryo-electron microscopic reconstruction at 7.5 A resolution.</title>
        <authorList>
            <person name="Mueller F."/>
            <person name="Sommer I."/>
            <person name="Baranov P."/>
            <person name="Matadeen R."/>
            <person name="Stoldt M."/>
            <person name="Woehnert J."/>
            <person name="Goerlach M."/>
            <person name="van Heel M."/>
            <person name="Brimacombe R."/>
        </authorList>
    </citation>
    <scope>3D-STRUCTURE MODELING</scope>
    <scope>SUBUNIT</scope>
</reference>
<reference key="12">
    <citation type="journal article" date="2005" name="Proc. Natl. Acad. Sci. U.S.A.">
        <title>Heptameric (L12)6/L10 rather than canonical pentameric complexes are found by tandem MS of intact ribosomes from thermophilic bacteria.</title>
        <authorList>
            <person name="Ilag L.L."/>
            <person name="Videler H."/>
            <person name="McKay A.R."/>
            <person name="Sobott F."/>
            <person name="Fucini P."/>
            <person name="Nierhaus K.H."/>
            <person name="Robinson C.V."/>
        </authorList>
    </citation>
    <scope>SUBUNIT</scope>
    <scope>STOICHIOMETRY</scope>
</reference>
<reference key="13">
    <citation type="journal article" date="2011" name="Nat. Chem. Biol.">
        <title>Identification of lysine succinylation as a new post-translational modification.</title>
        <authorList>
            <person name="Zhang Z."/>
            <person name="Tan M."/>
            <person name="Xie Z."/>
            <person name="Dai L."/>
            <person name="Chen Y."/>
            <person name="Zhao Y."/>
        </authorList>
    </citation>
    <scope>SUCCINYLATION AT LYS-72 AND LYS-81</scope>
    <source>
        <strain>K12</strain>
    </source>
</reference>
<reference key="14">
    <citation type="journal article" date="2003" name="Cell">
        <title>Study of the structural dynamics of the E. coli 70S ribosome using real-space refinement.</title>
        <authorList>
            <person name="Gao H."/>
            <person name="Sengupta J."/>
            <person name="Valle M."/>
            <person name="Korostelev A."/>
            <person name="Eswar N."/>
            <person name="Stagg S.M."/>
            <person name="Van Roey P."/>
            <person name="Agrawal R.K."/>
            <person name="Harvey S.C."/>
            <person name="Sali A."/>
            <person name="Chapman M.S."/>
            <person name="Frank J."/>
        </authorList>
    </citation>
    <scope>STRUCTURE BY ELECTRON MICROSCOPY (11.50 ANGSTROMS)</scope>
    <scope>SUBUNIT</scope>
    <source>
        <strain>MRE-600</strain>
    </source>
</reference>
<reference key="15">
    <citation type="journal article" date="2005" name="Science">
        <title>Structures of the bacterial ribosome at 3.5 A resolution.</title>
        <authorList>
            <person name="Schuwirth B.S."/>
            <person name="Borovinskaya M.A."/>
            <person name="Hau C.W."/>
            <person name="Zhang W."/>
            <person name="Vila-Sanjurjo A."/>
            <person name="Holton J.M."/>
            <person name="Cate J.H.D."/>
        </authorList>
    </citation>
    <scope>X-RAY CRYSTALLOGRAPHY (3.46 ANGSTROMS) OF 2 DIFFERENT RIBOSOME STRUCTURES</scope>
    <scope>SUBUNIT</scope>
    <source>
        <strain>MRE-600</strain>
    </source>
</reference>
<reference key="16">
    <citation type="journal article" date="2014" name="Cell Rep.">
        <title>Molecular basis for the ribosome functioning as an L-tryptophan sensor.</title>
        <authorList>
            <person name="Bischoff L."/>
            <person name="Berninghausen O."/>
            <person name="Beckmann R."/>
        </authorList>
    </citation>
    <scope>STRUCTURE BY ELECTRON MICROSCOPY (3.80 ANGSTROMS) OF 2-142 IN TNAC-STALLED 50S RIBOSOMAL SUBUNIT</scope>
    <scope>SUBUNIT</scope>
    <source>
        <strain>K12 / A19 / KC6</strain>
    </source>
</reference>
<reference key="17">
    <citation type="journal article" date="2014" name="PLoS Biol.">
        <title>Structural and functional insights into the mode of action of a universally conserved Obg GTPase.</title>
        <authorList>
            <person name="Feng B."/>
            <person name="Mandava C.S."/>
            <person name="Guo Q."/>
            <person name="Wang J."/>
            <person name="Cao W."/>
            <person name="Li N."/>
            <person name="Zhang Y."/>
            <person name="Zhang Y."/>
            <person name="Wang Z."/>
            <person name="Wu J."/>
            <person name="Sanyal S."/>
            <person name="Lei J."/>
            <person name="Gao N."/>
        </authorList>
    </citation>
    <scope>STRUCTURE BY ELECTRON MICROSCOPY (5.5 ANGSTROMS) OF 2-142 OF 50S RIBOSOMAL SUBUNIT IN COMPLEX WITH OBGE AND GMP-PNP</scope>
    <scope>SUBUNIT</scope>
</reference>
<reference key="18">
    <citation type="journal article" date="2017" name="Nature">
        <title>Mechanistic insights into the alternative translation termination by ArfA and RF2.</title>
        <authorList>
            <person name="Ma C."/>
            <person name="Kurita D."/>
            <person name="Li N."/>
            <person name="Chen Y."/>
            <person name="Himeno H."/>
            <person name="Gao N."/>
        </authorList>
    </citation>
    <scope>STRUCTURE BY ELECTRON MICROSCOPY (3.0 ANGSTROMS) OF 70S RIBOSOME IN COMPLEX WITH ARFA AND RF2</scope>
    <scope>SUBUNIT</scope>
</reference>
<reference key="19">
    <citation type="journal article" date="2017" name="Nature">
        <title>Structural basis for ArfA-RF2-mediated translation termination on mRNAs lacking stop codons.</title>
        <authorList>
            <person name="Huter P."/>
            <person name="Mueller C."/>
            <person name="Beckert B."/>
            <person name="Arenz S."/>
            <person name="Berninghausen O."/>
            <person name="Beckmann R."/>
            <person name="Wilson D.N."/>
        </authorList>
    </citation>
    <scope>STRUCTURE BY ELECTRON MICROSCOPY (3.1 ANGSTROMS) OF 70S RIBOSOME IN COMPLEX WITH ARFA AND RF2</scope>
    <scope>SUBUNIT</scope>
</reference>
<reference key="20">
    <citation type="journal article" date="2016" name="Science">
        <title>Translational termination without a stop codon.</title>
        <authorList>
            <person name="James N.R."/>
            <person name="Brown A."/>
            <person name="Gordiyenko Y."/>
            <person name="Ramakrishnan V."/>
        </authorList>
    </citation>
    <scope>STRUCTURE BY ELECTRON MICROSCOPY (2.97 ANGSTROMS) OF 70S RIBOSOME IN COMPLEX WITH ARFA AND RF2</scope>
    <scope>SUBUNIT</scope>
</reference>
<reference key="21">
    <citation type="journal article" date="2017" name="Nature">
        <title>Structural basis of co-translational quality control by ArfA and RF2 bound to ribosome.</title>
        <authorList>
            <person name="Zeng F."/>
            <person name="Chen Y."/>
            <person name="Remis J."/>
            <person name="Shekhar M."/>
            <person name="Phillips J.C."/>
            <person name="Tajkhorshid E."/>
            <person name="Jin H."/>
        </authorList>
    </citation>
    <scope>STRUCTURE BY ELECTRON MICROSCOPY (3.52 ANGSTROMS) OF 70S RIBOSOME IN COMPLEX WITH ARFA AND RF2</scope>
    <scope>SUBUNIT</scope>
</reference>
<accession>P0A7J7</accession>
<accession>P02409</accession>
<accession>P76778</accession>
<accession>Q2M8R9</accession>